<proteinExistence type="evidence at transcript level"/>
<accession>O97176</accession>
<accession>Q56LL2</accession>
<accession>Q56LL5</accession>
<accession>Q56LP9</accession>
<accession>Q56LS4</accession>
<accession>Q56LS6</accession>
<accession>Q56LX2</accession>
<accession>Q56LX7</accession>
<accession>Q56LZ2</accession>
<accession>Q56LZ7</accession>
<accession>Q56M22</accession>
<accession>Q56M82</accession>
<accession>Q56MB6</accession>
<accession>Q56MB7</accession>
<accession>Q56MC4</accession>
<accession>Q56MH8</accession>
<accession>Q56MI0</accession>
<accession>Q56MI2</accession>
<accession>Q56MI3</accession>
<accession>Q56MJ1</accession>
<accession>Q5S421</accession>
<accession>Q5S481</accession>
<accession>Q5S4G5</accession>
<accession>Q5S4I9</accession>
<accession>Q5S4L3</accession>
<keyword id="KW-1015">Disulfide bond</keyword>
<keyword id="KW-0646">Protease inhibitor</keyword>
<keyword id="KW-1185">Reference proteome</keyword>
<keyword id="KW-0677">Repeat</keyword>
<keyword id="KW-0722">Serine protease inhibitor</keyword>
<keyword id="KW-0732">Signal</keyword>
<sequence>MMSQTLTLCCLALVACVYGNTVSTNDTACPTFCPSIYKPVCGTDGQNFKEFASTCNLLSHNCRRERNSVQAYAATDAAWCSSEFVENLHEKLGNFKLEVKECFKPCSMIYQPVCITNGKYRAELANSCLLENFNCALQVSGAQPAELFRLLREEKC</sequence>
<name>ESM1_DROME</name>
<comment type="developmental stage">
    <text evidence="3 4">Expressed at the time when separation of neural and epidermal precursor cells occurs. Accumulates transiently at the fusion sites of anterior and posterior midgut and very specifically to high levels in the proventriculus of the embryo. Not expressed in the imaginal disks of third instar larvae.</text>
</comment>
<reference key="1">
    <citation type="journal article" date="1999" name="Mech. Dev.">
        <title>The Enhancer of split complex of Drosophila melanogaster harbors three classes of Notch responsive genes.</title>
        <authorList>
            <person name="Wurmbach E."/>
            <person name="Wech I."/>
            <person name="Preiss A."/>
        </authorList>
    </citation>
    <scope>NUCLEOTIDE SEQUENCE [GENOMIC DNA]</scope>
    <scope>DEVELOPMENTAL STAGE</scope>
    <source>
        <tissue>Embryo</tissue>
    </source>
</reference>
<reference key="2">
    <citation type="journal article" date="2005" name="Mol. Biol. Evol.">
        <title>Identifying signatures of selection at the enhancer of split neurogenic gene complex in Drosophila.</title>
        <authorList>
            <person name="Macdonald S.J."/>
            <person name="Long A.D."/>
        </authorList>
    </citation>
    <scope>NUCLEOTIDE SEQUENCE [GENOMIC DNA]</scope>
    <scope>VARIANTS ILE-2; SER-5; GLY-12 AND MET-104</scope>
    <source>
        <strain>NVIII-1</strain>
        <strain>NVIII-18</strain>
        <strain>NVIII-2</strain>
        <strain>NVIII-22</strain>
        <strain>NVIII-24</strain>
        <strain>NVIII-28</strain>
        <strain>NVIII-41</strain>
        <strain>NVIII-42</strain>
        <strain>NVIII-46</strain>
        <strain>NVIII-5</strain>
        <strain>NVIII-9</strain>
        <strain>NVIII-m11</strain>
        <strain>NVIII-m12</strain>
        <strain>NVIII-m13</strain>
        <strain>NVIII-m15</strain>
        <strain>NVIII-m19</strain>
    </source>
</reference>
<reference key="3">
    <citation type="journal article" date="2000" name="Science">
        <title>The genome sequence of Drosophila melanogaster.</title>
        <authorList>
            <person name="Adams M.D."/>
            <person name="Celniker S.E."/>
            <person name="Holt R.A."/>
            <person name="Evans C.A."/>
            <person name="Gocayne J.D."/>
            <person name="Amanatides P.G."/>
            <person name="Scherer S.E."/>
            <person name="Li P.W."/>
            <person name="Hoskins R.A."/>
            <person name="Galle R.F."/>
            <person name="George R.A."/>
            <person name="Lewis S.E."/>
            <person name="Richards S."/>
            <person name="Ashburner M."/>
            <person name="Henderson S.N."/>
            <person name="Sutton G.G."/>
            <person name="Wortman J.R."/>
            <person name="Yandell M.D."/>
            <person name="Zhang Q."/>
            <person name="Chen L.X."/>
            <person name="Brandon R.C."/>
            <person name="Rogers Y.-H.C."/>
            <person name="Blazej R.G."/>
            <person name="Champe M."/>
            <person name="Pfeiffer B.D."/>
            <person name="Wan K.H."/>
            <person name="Doyle C."/>
            <person name="Baxter E.G."/>
            <person name="Helt G."/>
            <person name="Nelson C.R."/>
            <person name="Miklos G.L.G."/>
            <person name="Abril J.F."/>
            <person name="Agbayani A."/>
            <person name="An H.-J."/>
            <person name="Andrews-Pfannkoch C."/>
            <person name="Baldwin D."/>
            <person name="Ballew R.M."/>
            <person name="Basu A."/>
            <person name="Baxendale J."/>
            <person name="Bayraktaroglu L."/>
            <person name="Beasley E.M."/>
            <person name="Beeson K.Y."/>
            <person name="Benos P.V."/>
            <person name="Berman B.P."/>
            <person name="Bhandari D."/>
            <person name="Bolshakov S."/>
            <person name="Borkova D."/>
            <person name="Botchan M.R."/>
            <person name="Bouck J."/>
            <person name="Brokstein P."/>
            <person name="Brottier P."/>
            <person name="Burtis K.C."/>
            <person name="Busam D.A."/>
            <person name="Butler H."/>
            <person name="Cadieu E."/>
            <person name="Center A."/>
            <person name="Chandra I."/>
            <person name="Cherry J.M."/>
            <person name="Cawley S."/>
            <person name="Dahlke C."/>
            <person name="Davenport L.B."/>
            <person name="Davies P."/>
            <person name="de Pablos B."/>
            <person name="Delcher A."/>
            <person name="Deng Z."/>
            <person name="Mays A.D."/>
            <person name="Dew I."/>
            <person name="Dietz S.M."/>
            <person name="Dodson K."/>
            <person name="Doup L.E."/>
            <person name="Downes M."/>
            <person name="Dugan-Rocha S."/>
            <person name="Dunkov B.C."/>
            <person name="Dunn P."/>
            <person name="Durbin K.J."/>
            <person name="Evangelista C.C."/>
            <person name="Ferraz C."/>
            <person name="Ferriera S."/>
            <person name="Fleischmann W."/>
            <person name="Fosler C."/>
            <person name="Gabrielian A.E."/>
            <person name="Garg N.S."/>
            <person name="Gelbart W.M."/>
            <person name="Glasser K."/>
            <person name="Glodek A."/>
            <person name="Gong F."/>
            <person name="Gorrell J.H."/>
            <person name="Gu Z."/>
            <person name="Guan P."/>
            <person name="Harris M."/>
            <person name="Harris N.L."/>
            <person name="Harvey D.A."/>
            <person name="Heiman T.J."/>
            <person name="Hernandez J.R."/>
            <person name="Houck J."/>
            <person name="Hostin D."/>
            <person name="Houston K.A."/>
            <person name="Howland T.J."/>
            <person name="Wei M.-H."/>
            <person name="Ibegwam C."/>
            <person name="Jalali M."/>
            <person name="Kalush F."/>
            <person name="Karpen G.H."/>
            <person name="Ke Z."/>
            <person name="Kennison J.A."/>
            <person name="Ketchum K.A."/>
            <person name="Kimmel B.E."/>
            <person name="Kodira C.D."/>
            <person name="Kraft C.L."/>
            <person name="Kravitz S."/>
            <person name="Kulp D."/>
            <person name="Lai Z."/>
            <person name="Lasko P."/>
            <person name="Lei Y."/>
            <person name="Levitsky A.A."/>
            <person name="Li J.H."/>
            <person name="Li Z."/>
            <person name="Liang Y."/>
            <person name="Lin X."/>
            <person name="Liu X."/>
            <person name="Mattei B."/>
            <person name="McIntosh T.C."/>
            <person name="McLeod M.P."/>
            <person name="McPherson D."/>
            <person name="Merkulov G."/>
            <person name="Milshina N.V."/>
            <person name="Mobarry C."/>
            <person name="Morris J."/>
            <person name="Moshrefi A."/>
            <person name="Mount S.M."/>
            <person name="Moy M."/>
            <person name="Murphy B."/>
            <person name="Murphy L."/>
            <person name="Muzny D.M."/>
            <person name="Nelson D.L."/>
            <person name="Nelson D.R."/>
            <person name="Nelson K.A."/>
            <person name="Nixon K."/>
            <person name="Nusskern D.R."/>
            <person name="Pacleb J.M."/>
            <person name="Palazzolo M."/>
            <person name="Pittman G.S."/>
            <person name="Pan S."/>
            <person name="Pollard J."/>
            <person name="Puri V."/>
            <person name="Reese M.G."/>
            <person name="Reinert K."/>
            <person name="Remington K."/>
            <person name="Saunders R.D.C."/>
            <person name="Scheeler F."/>
            <person name="Shen H."/>
            <person name="Shue B.C."/>
            <person name="Siden-Kiamos I."/>
            <person name="Simpson M."/>
            <person name="Skupski M.P."/>
            <person name="Smith T.J."/>
            <person name="Spier E."/>
            <person name="Spradling A.C."/>
            <person name="Stapleton M."/>
            <person name="Strong R."/>
            <person name="Sun E."/>
            <person name="Svirskas R."/>
            <person name="Tector C."/>
            <person name="Turner R."/>
            <person name="Venter E."/>
            <person name="Wang A.H."/>
            <person name="Wang X."/>
            <person name="Wang Z.-Y."/>
            <person name="Wassarman D.A."/>
            <person name="Weinstock G.M."/>
            <person name="Weissenbach J."/>
            <person name="Williams S.M."/>
            <person name="Woodage T."/>
            <person name="Worley K.C."/>
            <person name="Wu D."/>
            <person name="Yang S."/>
            <person name="Yao Q.A."/>
            <person name="Ye J."/>
            <person name="Yeh R.-F."/>
            <person name="Zaveri J.S."/>
            <person name="Zhan M."/>
            <person name="Zhang G."/>
            <person name="Zhao Q."/>
            <person name="Zheng L."/>
            <person name="Zheng X.H."/>
            <person name="Zhong F.N."/>
            <person name="Zhong W."/>
            <person name="Zhou X."/>
            <person name="Zhu S.C."/>
            <person name="Zhu X."/>
            <person name="Smith H.O."/>
            <person name="Gibbs R.A."/>
            <person name="Myers E.W."/>
            <person name="Rubin G.M."/>
            <person name="Venter J.C."/>
        </authorList>
    </citation>
    <scope>NUCLEOTIDE SEQUENCE [LARGE SCALE GENOMIC DNA]</scope>
    <source>
        <strain>Berkeley</strain>
    </source>
</reference>
<reference key="4">
    <citation type="journal article" date="2002" name="Genome Biol.">
        <title>Annotation of the Drosophila melanogaster euchromatic genome: a systematic review.</title>
        <authorList>
            <person name="Misra S."/>
            <person name="Crosby M.A."/>
            <person name="Mungall C.J."/>
            <person name="Matthews B.B."/>
            <person name="Campbell K.S."/>
            <person name="Hradecky P."/>
            <person name="Huang Y."/>
            <person name="Kaminker J.S."/>
            <person name="Millburn G.H."/>
            <person name="Prochnik S.E."/>
            <person name="Smith C.D."/>
            <person name="Tupy J.L."/>
            <person name="Whitfield E.J."/>
            <person name="Bayraktaroglu L."/>
            <person name="Berman B.P."/>
            <person name="Bettencourt B.R."/>
            <person name="Celniker S.E."/>
            <person name="de Grey A.D.N.J."/>
            <person name="Drysdale R.A."/>
            <person name="Harris N.L."/>
            <person name="Richter J."/>
            <person name="Russo S."/>
            <person name="Schroeder A.J."/>
            <person name="Shu S.Q."/>
            <person name="Stapleton M."/>
            <person name="Yamada C."/>
            <person name="Ashburner M."/>
            <person name="Gelbart W.M."/>
            <person name="Rubin G.M."/>
            <person name="Lewis S.E."/>
        </authorList>
    </citation>
    <scope>GENOME REANNOTATION</scope>
    <source>
        <strain>Berkeley</strain>
    </source>
</reference>
<reference key="5">
    <citation type="journal article" date="2002" name="Genome Biol.">
        <title>A Drosophila full-length cDNA resource.</title>
        <authorList>
            <person name="Stapleton M."/>
            <person name="Carlson J.W."/>
            <person name="Brokstein P."/>
            <person name="Yu C."/>
            <person name="Champe M."/>
            <person name="George R.A."/>
            <person name="Guarin H."/>
            <person name="Kronmiller B."/>
            <person name="Pacleb J.M."/>
            <person name="Park S."/>
            <person name="Wan K.H."/>
            <person name="Rubin G.M."/>
            <person name="Celniker S.E."/>
        </authorList>
    </citation>
    <scope>NUCLEOTIDE SEQUENCE [LARGE SCALE MRNA]</scope>
    <source>
        <strain>Berkeley</strain>
        <tissue>Embryo</tissue>
    </source>
</reference>
<reference key="6">
    <citation type="journal article" date="2005" name="Genome Biol.">
        <title>A low-cost open-source SNP genotyping platform for association mapping applications.</title>
        <authorList>
            <person name="Macdonald S.J."/>
            <person name="Pastinen T."/>
            <person name="Genissel A."/>
            <person name="Cornforth T.W."/>
            <person name="Long A.D."/>
        </authorList>
    </citation>
    <scope>NUCLEOTIDE SEQUENCE [GENOMIC DNA] OF 1-70</scope>
    <scope>VARIANTS ILE-2 AND GLY-12</scope>
    <source>
        <strain>Nv2001_f0501</strain>
        <strain>Nv2001_f0502</strain>
        <strain>Nv2001_f0503</strain>
        <strain>Nv2001_f0504</strain>
        <strain>Nv2001_f0505</strain>
        <strain>Nv2001_f0506</strain>
        <strain>Nv2001_f0507</strain>
        <strain>Nv2001_f0508</strain>
        <strain>Nv2001_f0509</strain>
        <strain>Nv2001_f0510</strain>
        <strain>Nv2001_f0511</strain>
        <strain>Nv2001_f0512</strain>
        <strain>Nv2001_f0513</strain>
        <strain>Nv2001_f0515</strain>
        <strain>Nv2001_f0516</strain>
        <strain>Nv2001_f0517</strain>
        <strain>Nv2001_f0518</strain>
        <strain>Nv2001_f0519</strain>
        <strain>Nv2001_f0520</strain>
        <strain>Nv2001_f0521</strain>
        <strain>Nv2001_f0522</strain>
        <strain>Nv2001_f0523</strain>
        <strain>Nv2001_f0524</strain>
        <strain>Nv2001_f0525</strain>
        <strain>Nv2001_f0526</strain>
        <strain>Nv2001_f0527</strain>
        <strain>Nv2001_f0528</strain>
        <strain>Nv2001_f0529</strain>
        <strain>Nv2001_f0530</strain>
        <strain>Nv2001_f0531</strain>
        <strain>Nv2001_f0532</strain>
        <strain>Nv2001_f0533</strain>
        <strain>Nv2001_f0534</strain>
        <strain>Nv2001_f0535</strain>
        <strain>Nv2001_f0536</strain>
        <strain>Nv2001_f0537</strain>
        <strain>Nv2001_f0538</strain>
        <strain>Nv2001_f0539</strain>
        <strain>Nv2001_f0540</strain>
        <strain>Nv2001_f0541</strain>
        <strain>Nv2001_f0542</strain>
        <strain>Nv2001_f0543</strain>
        <strain>Nv2001_f0544</strain>
        <strain>Nv2001_f0545</strain>
        <strain>Nv2001_f0546</strain>
        <strain>Nv2001_f0547</strain>
        <strain>Nv2001_f0548</strain>
        <strain>Nv2001_f0549</strain>
        <strain>Nv2001_f0550</strain>
        <strain>Nv2001_f0551</strain>
        <strain>Nv2001_f0552</strain>
        <strain>Nv2001_f0553</strain>
        <strain>Nv2001_f0554</strain>
        <strain>Nv2001_f0555</strain>
        <strain>Nv2001_f0556</strain>
        <strain>Nv2001_f0557</strain>
        <strain>Nv2001_f0558</strain>
        <strain>Nv2001_f0559</strain>
        <strain>Nv2001_f0560</strain>
        <strain>Nv2001_f0561</strain>
        <strain>Nv2001_f0562</strain>
        <strain>Nv2001_f0563</strain>
        <strain>Nv2001_f0564</strain>
        <strain>Nv2001_f0565</strain>
        <strain>Nv2001_f0566</strain>
        <strain>Nv2001_f0567</strain>
        <strain>Nv2001_f0568</strain>
        <strain>Nv2001_f0569</strain>
        <strain>Nv2001_f0570</strain>
        <strain>Nv2001_f0571</strain>
        <strain>Nv2001_f0572</strain>
        <strain>Nv2001_f0573</strain>
        <strain>Nv2001_f0574</strain>
        <strain>Nv2001_f0575</strain>
        <strain>Nv2001_f0576</strain>
        <strain>Nv2001_f0577</strain>
        <strain>Nv2001_f0578</strain>
        <strain>Nv2001_f0579</strain>
        <strain>Nv2001_f0580</strain>
        <strain>Nv2001_f0581</strain>
        <strain>Nv2001_f0582</strain>
        <strain>Nv2001_f0583</strain>
        <strain>Nv2001_f0584</strain>
        <strain>Nv2001_f0585</strain>
        <strain>Nv2001_f0586</strain>
        <strain>Nv2001_f0587</strain>
        <strain>Nv2001_f0588</strain>
        <strain>Nv2001_f0590</strain>
        <strain>Nv2001_f0591</strain>
        <strain>Nv2001_f0592</strain>
        <strain>Nv2001_f0593</strain>
        <strain>Nv2001_f0594</strain>
        <strain>Nv2001_f0595</strain>
        <strain>Nv2001_f0596</strain>
        <strain>Nv2001_f0597</strain>
        <strain>Nv2001_f0598</strain>
        <strain>Nv2001_f0599</strain>
        <strain>Nv2001_f0600</strain>
        <strain>Nv2001_f0601</strain>
        <strain>Nv2001_f0602</strain>
        <strain>Nv2001_f0603</strain>
        <strain>Nv2001_f0604</strain>
        <strain>Nv2001_f0605</strain>
        <strain>Nv2001_f0606</strain>
        <strain>Nv2001_f0607</strain>
        <strain>Nv2001_f0608</strain>
        <strain>Nv2001_f0609</strain>
        <strain>Nv2001_f0610</strain>
        <strain>Nv2001_f0611</strain>
        <strain>Nv2001_f0612</strain>
        <strain>Nv2001_f0613</strain>
        <strain>Nv2001_f0614</strain>
        <strain>Nv2001_f0615</strain>
        <strain>Nv2001_f0616</strain>
        <strain>Nv2001_f0617</strain>
        <strain>Nv2001_f0618</strain>
        <strain>Nv2001_f0619</strain>
        <strain>Nv2001_f0620</strain>
        <strain>Nv2001_f0621</strain>
        <strain>Nv2001_f0622</strain>
        <strain>Nv2001_f0623</strain>
        <strain>Nv2001_f0624</strain>
        <strain>Nv2001_f0625</strain>
        <strain>Nv2001_f0626</strain>
        <strain>Nv2001_f0627</strain>
        <strain>Nv2001_f0628</strain>
        <strain>Nv2001_f0629</strain>
        <strain>Nv2001_f0630</strain>
        <strain>Nv2001_f0631</strain>
        <strain>Nv2001_f0632</strain>
        <strain>Nv2001_f0633</strain>
        <strain>Nv2001_f0634</strain>
        <strain>Nv2001_f0635</strain>
        <strain>Nv2001_f0636</strain>
        <strain>Nv2001_f0638</strain>
        <strain>Nv2001_f0639</strain>
        <strain>Nv2001_f0640</strain>
        <strain>Nv2001_f0641</strain>
        <strain>Nv2001_f0642</strain>
        <strain>Nv2001_f0643</strain>
        <strain>Nv2001_f0644</strain>
        <strain>Nv2001_f0645</strain>
        <strain>Nv2001_f0646</strain>
        <strain>Nv2001_f0647</strain>
        <strain>Nv2001_f0648</strain>
        <strain>Nv2001_f0649</strain>
        <strain>Nv2001_f0650</strain>
        <strain>Nv2001_f0651</strain>
        <strain>Nv2001_f0652</strain>
        <strain>Nv2001_f0653</strain>
        <strain>Nv2001_f0654</strain>
        <strain>Nv2001_f0655</strain>
        <strain>Nv2001_f0656</strain>
        <strain>Nv2001_f0657</strain>
        <strain>Nv2001_f0658</strain>
        <strain>Nv2001_f0659</strain>
        <strain>Nv2001_f0660</strain>
        <strain>Nv2001_f0661</strain>
        <strain>Nv2001_f0662</strain>
        <strain>Nv2001_f0663</strain>
        <strain>Nv2001_f0665</strain>
        <strain>Nv2001_f0667</strain>
        <strain>Nv2001_f0668</strain>
        <strain>Nv2001_f0669</strain>
        <strain>Nv2001_f0670</strain>
        <strain>Nv2001_f0671</strain>
        <strain>Nv2001_f0672</strain>
        <strain>Nv2001_f0673</strain>
        <strain>Nv2001_f0674</strain>
        <strain>Nv2001_f0675</strain>
        <strain>Nv2001_f0676</strain>
        <strain>Nv2001_f0677</strain>
        <strain>Nv2001_f0678</strain>
        <strain>Nv2001_f0679</strain>
        <strain>Nv2001_f0680</strain>
        <strain>Nv2001_f0681</strain>
        <strain>Nv2001_f0682</strain>
        <strain>Nv2001_f0683</strain>
        <strain>Nv2001_f0684</strain>
        <strain>Nv2001_f0685</strain>
        <strain>Nv2001_f0686</strain>
        <strain>Nv2001_f0687</strain>
        <strain>Nv2001_f0688</strain>
        <strain>Nv2001_f0689</strain>
        <strain>Nv2001_f0690</strain>
        <strain>Nv2001_f0691</strain>
        <strain>Nv2001_f0692</strain>
        <strain>Nv2001_f0693</strain>
        <strain>Nv2001_f0694</strain>
        <strain>Nv2001_f0695</strain>
        <strain>Nv2001_f0697</strain>
        <strain>Nv2001_f0698</strain>
        <strain>Nv2001_f0699</strain>
        <strain>Nv2001_f0700</strain>
        <strain>Nv2001_f0701</strain>
        <strain>Nv2001_f0702</strain>
        <strain>Nv2001_f0703</strain>
        <strain>Nv2001_f0705</strain>
        <strain>Nv2001_f0706</strain>
        <strain>Nv2001_f0707</strain>
        <strain>Nv2001_f0708</strain>
        <strain>Nv2001_f0709</strain>
        <strain>Nv2001_f0710</strain>
        <strain>Nv2001_f0711</strain>
        <strain>Nv2001_f0712</strain>
        <strain>Nv2001_f0713</strain>
        <strain>Nv2001_f0714</strain>
        <strain>Nv2001_f0715</strain>
        <strain>Nv2001_f0716</strain>
        <strain>Nv2001_f0717</strain>
        <strain>Nv2001_f0718</strain>
        <strain>Nv2001_f0720</strain>
        <strain>Nv2001_f0721</strain>
        <strain>Nv2001_f0722</strain>
        <strain>Nv2001_f0723</strain>
        <strain>Nv2001_f0725</strain>
        <strain>Nv2001_f0726</strain>
        <strain>Nv2001_f0728</strain>
        <strain>Nv2001_f0729</strain>
        <strain>Nv2001_f0730</strain>
        <strain>Nv2001_f0731</strain>
        <strain>Nv2001_f0732</strain>
        <strain>Nv2001_f0734</strain>
        <strain>Nv2001_f0735</strain>
        <strain>Nv2001_f0736</strain>
        <strain>Nv2001_f0737</strain>
        <strain>Nv2001_f0738</strain>
        <strain>Nv2001_f0739</strain>
        <strain>Nv2001_f0740</strain>
        <strain>Nv2001_f0741</strain>
        <strain>Nv2001_f0742</strain>
        <strain>Nv2001_f0743</strain>
        <strain>Nv2001_f0744</strain>
        <strain>Nv2001_f0745</strain>
        <strain>Nv2001_f0746</strain>
        <strain>Nv2001_f0747</strain>
        <strain>Nv2001_f0748</strain>
        <strain>Nv2001_f0749</strain>
        <strain>Nv2001_f0750</strain>
        <strain>Nv2001_f0751</strain>
        <strain>Nv2001_f0753</strain>
        <strain>Nv2001_f0754</strain>
        <strain>Nv2001_f0755</strain>
        <strain>Nv2001_f0756</strain>
        <strain>Nv2001_f0757</strain>
        <strain>Nv2001_f0758</strain>
        <strain>Nv2001_f0759</strain>
        <strain>Nv2001_f0760</strain>
        <strain>Nv2001_f0761</strain>
        <strain>Nv2001_f0762</strain>
        <strain>Nv2001_f0763</strain>
        <strain>Nv2001_f0764</strain>
        <strain>Nv2001_f0765</strain>
        <strain>Nv2001_f0766</strain>
        <strain>Nv2001_f0767</strain>
        <strain>Nv2001_f0768</strain>
        <strain>Nv2001_f0769</strain>
        <strain>Nv2001_f0770</strain>
        <strain>Nv2001_f0771</strain>
        <strain>Nv2001_f0772</strain>
        <strain>Nv2001_f0773</strain>
        <strain>Nv2001_f0774</strain>
        <strain>Nv2001_f0776</strain>
        <strain>Nv2001_f0777</strain>
        <strain>Nv2001_f0778</strain>
        <strain>Nv2001_f0779</strain>
        <strain>Nv2001_f0780</strain>
        <strain>Nv2001_f0781</strain>
        <strain>Nv2001_f0782</strain>
        <strain>Nv2001_f0783</strain>
        <strain>Nv2001_f0784</strain>
        <strain>Nv2001_f0785</strain>
        <strain>Nv2001_f0786</strain>
        <strain>Nv2001_f0788</strain>
        <strain>Nv2001_f0789</strain>
        <strain>Nv2001_f0790</strain>
        <strain>Nv2001_f0791</strain>
        <strain>Nv2001_f0792</strain>
        <strain>Nv2001_f0793</strain>
        <strain>Nv2001_f0794</strain>
        <strain>Nv2001_f0795</strain>
        <strain>Nv2001_f0796</strain>
        <strain>Nv2001_f0797</strain>
        <strain>Nv2001_f0798</strain>
        <strain>Nv2001_f0799</strain>
        <strain>Nv2001_f0801</strain>
        <strain>Nv2001_f0803</strain>
        <strain>Nv2001_f0804</strain>
        <strain>Nv2001_f0805</strain>
        <strain>Nv2001_f0806</strain>
        <strain>Nv2001_f0807</strain>
        <strain>Nv2001_f0808</strain>
        <strain>Nv2001_f0809</strain>
        <strain>Nv2001_f0810</strain>
        <strain>Nv2001_f0811</strain>
        <strain>Nv2001_f0812</strain>
        <strain>Nv2001_f0813</strain>
        <strain>Nv2001_f0814</strain>
        <strain>Nv2001_f0815</strain>
        <strain>Nv2001_f0816</strain>
        <strain>Nv2001_f0818</strain>
        <strain>Nv2001_f0819</strain>
        <strain>Nv2001_f0820</strain>
        <strain>Nv2001_f0821</strain>
        <strain>Nv2001_f0822</strain>
        <strain>Nv2001_f0823</strain>
        <strain>Nv2001_f0824</strain>
        <strain>Nv2001_f0825</strain>
        <strain>Nv2001_f0826</strain>
        <strain>Nv2001_f0827</strain>
        <strain>Nv2001_f0828</strain>
        <strain>Nv2001_f0829</strain>
        <strain>Nv2001_f0830</strain>
        <strain>Nv2001_f0831</strain>
        <strain>Nv2001_f0832</strain>
        <strain>Nv2001_f0833</strain>
        <strain>Nv2001_f0834</strain>
        <strain>Nv2001_f0835</strain>
        <strain>Nv2001_f0836</strain>
        <strain>Nv2001_f0838</strain>
        <strain>Nv2001_f0839</strain>
        <strain>Nv2001_f0840</strain>
        <strain>Nv2001_f0841</strain>
        <strain>Nv2001_f0842</strain>
        <strain>Nv2001_f0843</strain>
        <strain>Nv2001_f0844</strain>
        <strain>Nv2001_f0845</strain>
        <strain>Nv2001_f0846</strain>
        <strain>Nv2001_f0847</strain>
        <strain>Nv2001_f0849</strain>
        <strain>Nv2001_f0850</strain>
        <strain>Nv2001_f0851</strain>
        <strain>Nv2001_f0852</strain>
        <strain>Nv2001_f0853</strain>
        <strain>Nv2001_f0854</strain>
        <strain>Nv2001_f0855</strain>
        <strain>Nv2001_f0856</strain>
        <strain>Nv2001_f0857</strain>
        <strain>Nv2001_f0858</strain>
        <strain>Nv2001_f0859</strain>
        <strain>Nv2001_f0860</strain>
        <strain>Nv2001_f0861</strain>
        <strain>Nv2001_f0862</strain>
        <strain>Nv2001_f0863</strain>
        <strain>Nv2001_f0864</strain>
        <strain>Nv2001_f0865</strain>
        <strain>Nv2001_f0866</strain>
        <strain>Nv2001_f0867</strain>
        <strain>Nv2001_f0868</strain>
        <strain>Nv2001_f0869</strain>
        <strain>Nv2001_f0870</strain>
        <strain>Nv2001_f0871</strain>
        <strain>Nv2001_f0872</strain>
        <strain>Nv2001_f0873</strain>
        <strain>Nv2001_f0874</strain>
        <strain>Nv2001_f0875</strain>
        <strain>Nv2001_f1002</strain>
    </source>
</reference>
<reference key="7">
    <citation type="journal article" date="2000" name="Development">
        <title>The enhancer of split complex of Drosophila includes four Notch-regulated members of the bearded gene family.</title>
        <authorList>
            <person name="Lai E.C."/>
            <person name="Bodner R."/>
            <person name="Posakony J.W."/>
        </authorList>
    </citation>
    <scope>DEVELOPMENTAL STAGE</scope>
</reference>
<dbReference type="EMBL" id="AJ010167">
    <property type="protein sequence ID" value="CAB39163.1"/>
    <property type="molecule type" value="Genomic_DNA"/>
</dbReference>
<dbReference type="EMBL" id="AY779906">
    <property type="protein sequence ID" value="AAV59053.1"/>
    <property type="molecule type" value="Genomic_DNA"/>
</dbReference>
<dbReference type="EMBL" id="AY779907">
    <property type="protein sequence ID" value="AAV59065.1"/>
    <property type="molecule type" value="Genomic_DNA"/>
</dbReference>
<dbReference type="EMBL" id="AY779908">
    <property type="protein sequence ID" value="AAV59077.1"/>
    <property type="molecule type" value="Genomic_DNA"/>
</dbReference>
<dbReference type="EMBL" id="AY779909">
    <property type="protein sequence ID" value="AAV59089.1"/>
    <property type="molecule type" value="Genomic_DNA"/>
</dbReference>
<dbReference type="EMBL" id="AY779910">
    <property type="protein sequence ID" value="AAV59101.1"/>
    <property type="molecule type" value="Genomic_DNA"/>
</dbReference>
<dbReference type="EMBL" id="AY779911">
    <property type="protein sequence ID" value="AAV59113.1"/>
    <property type="molecule type" value="Genomic_DNA"/>
</dbReference>
<dbReference type="EMBL" id="AY779912">
    <property type="protein sequence ID" value="AAV59125.1"/>
    <property type="molecule type" value="Genomic_DNA"/>
</dbReference>
<dbReference type="EMBL" id="AY779913">
    <property type="protein sequence ID" value="AAV59137.1"/>
    <property type="molecule type" value="Genomic_DNA"/>
</dbReference>
<dbReference type="EMBL" id="AY779914">
    <property type="protein sequence ID" value="AAV59149.1"/>
    <property type="molecule type" value="Genomic_DNA"/>
</dbReference>
<dbReference type="EMBL" id="AY779915">
    <property type="protein sequence ID" value="AAV59161.1"/>
    <property type="molecule type" value="Genomic_DNA"/>
</dbReference>
<dbReference type="EMBL" id="AY779916">
    <property type="protein sequence ID" value="AAV59173.1"/>
    <property type="molecule type" value="Genomic_DNA"/>
</dbReference>
<dbReference type="EMBL" id="AY779917">
    <property type="protein sequence ID" value="AAV59185.1"/>
    <property type="molecule type" value="Genomic_DNA"/>
</dbReference>
<dbReference type="EMBL" id="AY779918">
    <property type="protein sequence ID" value="AAV59197.1"/>
    <property type="molecule type" value="Genomic_DNA"/>
</dbReference>
<dbReference type="EMBL" id="AY779919">
    <property type="protein sequence ID" value="AAV59209.1"/>
    <property type="molecule type" value="Genomic_DNA"/>
</dbReference>
<dbReference type="EMBL" id="AY779920">
    <property type="protein sequence ID" value="AAV59221.1"/>
    <property type="molecule type" value="Genomic_DNA"/>
</dbReference>
<dbReference type="EMBL" id="AY779921">
    <property type="protein sequence ID" value="AAV59233.1"/>
    <property type="molecule type" value="Genomic_DNA"/>
</dbReference>
<dbReference type="EMBL" id="AE014297">
    <property type="protein sequence ID" value="AAF56548.1"/>
    <property type="molecule type" value="Genomic_DNA"/>
</dbReference>
<dbReference type="EMBL" id="AY113480">
    <property type="protein sequence ID" value="AAM29485.1"/>
    <property type="molecule type" value="mRNA"/>
</dbReference>
<dbReference type="EMBL" id="AY905900">
    <property type="protein sequence ID" value="AAX60246.1"/>
    <property type="molecule type" value="Genomic_DNA"/>
</dbReference>
<dbReference type="EMBL" id="AY905901">
    <property type="protein sequence ID" value="AAX60247.1"/>
    <property type="molecule type" value="Genomic_DNA"/>
</dbReference>
<dbReference type="EMBL" id="AY905902">
    <property type="protein sequence ID" value="AAX60248.1"/>
    <property type="molecule type" value="Genomic_DNA"/>
</dbReference>
<dbReference type="EMBL" id="AY905903">
    <property type="protein sequence ID" value="AAX60249.1"/>
    <property type="molecule type" value="Genomic_DNA"/>
</dbReference>
<dbReference type="EMBL" id="AY905904">
    <property type="protein sequence ID" value="AAX60250.1"/>
    <property type="molecule type" value="Genomic_DNA"/>
</dbReference>
<dbReference type="EMBL" id="AY905905">
    <property type="protein sequence ID" value="AAX60251.1"/>
    <property type="molecule type" value="Genomic_DNA"/>
</dbReference>
<dbReference type="EMBL" id="AY905906">
    <property type="protein sequence ID" value="AAX60252.1"/>
    <property type="molecule type" value="Genomic_DNA"/>
</dbReference>
<dbReference type="EMBL" id="AY905907">
    <property type="protein sequence ID" value="AAX60253.1"/>
    <property type="molecule type" value="Genomic_DNA"/>
</dbReference>
<dbReference type="EMBL" id="AY905908">
    <property type="protein sequence ID" value="AAX60254.1"/>
    <property type="molecule type" value="Genomic_DNA"/>
</dbReference>
<dbReference type="EMBL" id="AY905909">
    <property type="protein sequence ID" value="AAX60255.1"/>
    <property type="molecule type" value="Genomic_DNA"/>
</dbReference>
<dbReference type="EMBL" id="AY905910">
    <property type="protein sequence ID" value="AAX60256.1"/>
    <property type="molecule type" value="Genomic_DNA"/>
</dbReference>
<dbReference type="EMBL" id="AY905911">
    <property type="protein sequence ID" value="AAX60257.1"/>
    <property type="molecule type" value="Genomic_DNA"/>
</dbReference>
<dbReference type="EMBL" id="AY905912">
    <property type="protein sequence ID" value="AAX60258.1"/>
    <property type="molecule type" value="Genomic_DNA"/>
</dbReference>
<dbReference type="EMBL" id="AY905913">
    <property type="protein sequence ID" value="AAX60259.1"/>
    <property type="molecule type" value="Genomic_DNA"/>
</dbReference>
<dbReference type="EMBL" id="AY905914">
    <property type="protein sequence ID" value="AAX60260.1"/>
    <property type="molecule type" value="Genomic_DNA"/>
</dbReference>
<dbReference type="EMBL" id="AY905915">
    <property type="protein sequence ID" value="AAX60261.1"/>
    <property type="molecule type" value="Genomic_DNA"/>
</dbReference>
<dbReference type="EMBL" id="AY905916">
    <property type="protein sequence ID" value="AAX60262.1"/>
    <property type="molecule type" value="Genomic_DNA"/>
</dbReference>
<dbReference type="EMBL" id="AY905917">
    <property type="protein sequence ID" value="AAX60263.1"/>
    <property type="molecule type" value="Genomic_DNA"/>
</dbReference>
<dbReference type="EMBL" id="AY905918">
    <property type="protein sequence ID" value="AAX60264.1"/>
    <property type="molecule type" value="Genomic_DNA"/>
</dbReference>
<dbReference type="EMBL" id="AY905919">
    <property type="protein sequence ID" value="AAX60265.1"/>
    <property type="molecule type" value="Genomic_DNA"/>
</dbReference>
<dbReference type="EMBL" id="AY905920">
    <property type="protein sequence ID" value="AAX60266.1"/>
    <property type="molecule type" value="Genomic_DNA"/>
</dbReference>
<dbReference type="EMBL" id="AY905921">
    <property type="protein sequence ID" value="AAX60267.1"/>
    <property type="molecule type" value="Genomic_DNA"/>
</dbReference>
<dbReference type="EMBL" id="AY905922">
    <property type="protein sequence ID" value="AAX60268.1"/>
    <property type="molecule type" value="Genomic_DNA"/>
</dbReference>
<dbReference type="EMBL" id="AY905923">
    <property type="protein sequence ID" value="AAX60269.1"/>
    <property type="molecule type" value="Genomic_DNA"/>
</dbReference>
<dbReference type="EMBL" id="AY905924">
    <property type="protein sequence ID" value="AAX60270.1"/>
    <property type="molecule type" value="Genomic_DNA"/>
</dbReference>
<dbReference type="EMBL" id="AY905925">
    <property type="protein sequence ID" value="AAX60271.1"/>
    <property type="molecule type" value="Genomic_DNA"/>
</dbReference>
<dbReference type="EMBL" id="AY905926">
    <property type="protein sequence ID" value="AAX60272.1"/>
    <property type="molecule type" value="Genomic_DNA"/>
</dbReference>
<dbReference type="EMBL" id="AY905927">
    <property type="protein sequence ID" value="AAX60273.1"/>
    <property type="molecule type" value="Genomic_DNA"/>
</dbReference>
<dbReference type="EMBL" id="AY905928">
    <property type="protein sequence ID" value="AAX60274.1"/>
    <property type="molecule type" value="Genomic_DNA"/>
</dbReference>
<dbReference type="EMBL" id="AY905929">
    <property type="protein sequence ID" value="AAX60275.1"/>
    <property type="molecule type" value="Genomic_DNA"/>
</dbReference>
<dbReference type="EMBL" id="AY905930">
    <property type="protein sequence ID" value="AAX60276.1"/>
    <property type="molecule type" value="Genomic_DNA"/>
</dbReference>
<dbReference type="EMBL" id="AY905931">
    <property type="protein sequence ID" value="AAX60277.1"/>
    <property type="molecule type" value="Genomic_DNA"/>
</dbReference>
<dbReference type="EMBL" id="AY905932">
    <property type="protein sequence ID" value="AAX60278.1"/>
    <property type="molecule type" value="Genomic_DNA"/>
</dbReference>
<dbReference type="EMBL" id="AY905933">
    <property type="protein sequence ID" value="AAX60279.1"/>
    <property type="molecule type" value="Genomic_DNA"/>
</dbReference>
<dbReference type="EMBL" id="AY905934">
    <property type="protein sequence ID" value="AAX60280.1"/>
    <property type="molecule type" value="Genomic_DNA"/>
</dbReference>
<dbReference type="EMBL" id="AY905935">
    <property type="protein sequence ID" value="AAX60281.1"/>
    <property type="molecule type" value="Genomic_DNA"/>
</dbReference>
<dbReference type="EMBL" id="AY905936">
    <property type="protein sequence ID" value="AAX60282.1"/>
    <property type="molecule type" value="Genomic_DNA"/>
</dbReference>
<dbReference type="EMBL" id="AY905937">
    <property type="protein sequence ID" value="AAX60283.1"/>
    <property type="molecule type" value="Genomic_DNA"/>
</dbReference>
<dbReference type="EMBL" id="AY905938">
    <property type="protein sequence ID" value="AAX60284.1"/>
    <property type="molecule type" value="Genomic_DNA"/>
</dbReference>
<dbReference type="EMBL" id="AY905939">
    <property type="protein sequence ID" value="AAX60285.1"/>
    <property type="molecule type" value="Genomic_DNA"/>
</dbReference>
<dbReference type="EMBL" id="AY905940">
    <property type="protein sequence ID" value="AAX60286.1"/>
    <property type="molecule type" value="Genomic_DNA"/>
</dbReference>
<dbReference type="EMBL" id="AY905941">
    <property type="protein sequence ID" value="AAX60287.1"/>
    <property type="molecule type" value="Genomic_DNA"/>
</dbReference>
<dbReference type="EMBL" id="AY905942">
    <property type="protein sequence ID" value="AAX60288.1"/>
    <property type="molecule type" value="Genomic_DNA"/>
</dbReference>
<dbReference type="EMBL" id="AY905943">
    <property type="protein sequence ID" value="AAX60289.1"/>
    <property type="molecule type" value="Genomic_DNA"/>
</dbReference>
<dbReference type="EMBL" id="AY905944">
    <property type="protein sequence ID" value="AAX60290.1"/>
    <property type="molecule type" value="Genomic_DNA"/>
</dbReference>
<dbReference type="EMBL" id="AY905945">
    <property type="protein sequence ID" value="AAX60291.1"/>
    <property type="molecule type" value="Genomic_DNA"/>
</dbReference>
<dbReference type="EMBL" id="AY905946">
    <property type="protein sequence ID" value="AAX60292.1"/>
    <property type="molecule type" value="Genomic_DNA"/>
</dbReference>
<dbReference type="EMBL" id="AY905947">
    <property type="protein sequence ID" value="AAX60293.1"/>
    <property type="molecule type" value="Genomic_DNA"/>
</dbReference>
<dbReference type="EMBL" id="AY905948">
    <property type="protein sequence ID" value="AAX60294.1"/>
    <property type="molecule type" value="Genomic_DNA"/>
</dbReference>
<dbReference type="EMBL" id="AY905949">
    <property type="protein sequence ID" value="AAX60295.1"/>
    <property type="molecule type" value="Genomic_DNA"/>
</dbReference>
<dbReference type="EMBL" id="AY905950">
    <property type="protein sequence ID" value="AAX60296.1"/>
    <property type="molecule type" value="Genomic_DNA"/>
</dbReference>
<dbReference type="EMBL" id="AY905951">
    <property type="protein sequence ID" value="AAX60297.1"/>
    <property type="molecule type" value="Genomic_DNA"/>
</dbReference>
<dbReference type="EMBL" id="AY905952">
    <property type="protein sequence ID" value="AAX60298.1"/>
    <property type="molecule type" value="Genomic_DNA"/>
</dbReference>
<dbReference type="EMBL" id="AY905953">
    <property type="protein sequence ID" value="AAX60299.1"/>
    <property type="molecule type" value="Genomic_DNA"/>
</dbReference>
<dbReference type="EMBL" id="AY905954">
    <property type="protein sequence ID" value="AAX60300.1"/>
    <property type="molecule type" value="Genomic_DNA"/>
</dbReference>
<dbReference type="EMBL" id="AY905955">
    <property type="protein sequence ID" value="AAX60301.1"/>
    <property type="molecule type" value="Genomic_DNA"/>
</dbReference>
<dbReference type="EMBL" id="AY905956">
    <property type="protein sequence ID" value="AAX60302.1"/>
    <property type="molecule type" value="Genomic_DNA"/>
</dbReference>
<dbReference type="EMBL" id="AY905957">
    <property type="protein sequence ID" value="AAX60303.1"/>
    <property type="molecule type" value="Genomic_DNA"/>
</dbReference>
<dbReference type="EMBL" id="AY905958">
    <property type="protein sequence ID" value="AAX60304.1"/>
    <property type="molecule type" value="Genomic_DNA"/>
</dbReference>
<dbReference type="EMBL" id="AY905959">
    <property type="protein sequence ID" value="AAX60305.1"/>
    <property type="molecule type" value="Genomic_DNA"/>
</dbReference>
<dbReference type="EMBL" id="AY905960">
    <property type="protein sequence ID" value="AAX60306.1"/>
    <property type="molecule type" value="Genomic_DNA"/>
</dbReference>
<dbReference type="EMBL" id="AY905961">
    <property type="protein sequence ID" value="AAX60307.1"/>
    <property type="molecule type" value="Genomic_DNA"/>
</dbReference>
<dbReference type="EMBL" id="AY905962">
    <property type="protein sequence ID" value="AAX60308.1"/>
    <property type="molecule type" value="Genomic_DNA"/>
</dbReference>
<dbReference type="EMBL" id="AY905963">
    <property type="protein sequence ID" value="AAX60309.1"/>
    <property type="molecule type" value="Genomic_DNA"/>
</dbReference>
<dbReference type="EMBL" id="AY905964">
    <property type="protein sequence ID" value="AAX60310.1"/>
    <property type="molecule type" value="Genomic_DNA"/>
</dbReference>
<dbReference type="EMBL" id="AY905965">
    <property type="protein sequence ID" value="AAX60311.1"/>
    <property type="molecule type" value="Genomic_DNA"/>
</dbReference>
<dbReference type="EMBL" id="AY905966">
    <property type="protein sequence ID" value="AAX60312.1"/>
    <property type="molecule type" value="Genomic_DNA"/>
</dbReference>
<dbReference type="EMBL" id="AY905967">
    <property type="protein sequence ID" value="AAX60313.1"/>
    <property type="molecule type" value="Genomic_DNA"/>
</dbReference>
<dbReference type="EMBL" id="AY905968">
    <property type="protein sequence ID" value="AAX60314.1"/>
    <property type="molecule type" value="Genomic_DNA"/>
</dbReference>
<dbReference type="EMBL" id="AY905969">
    <property type="protein sequence ID" value="AAX60315.1"/>
    <property type="molecule type" value="Genomic_DNA"/>
</dbReference>
<dbReference type="EMBL" id="AY905970">
    <property type="protein sequence ID" value="AAX60316.1"/>
    <property type="molecule type" value="Genomic_DNA"/>
</dbReference>
<dbReference type="EMBL" id="AY905971">
    <property type="protein sequence ID" value="AAX60317.1"/>
    <property type="molecule type" value="Genomic_DNA"/>
</dbReference>
<dbReference type="EMBL" id="AY905972">
    <property type="protein sequence ID" value="AAX60318.1"/>
    <property type="molecule type" value="Genomic_DNA"/>
</dbReference>
<dbReference type="EMBL" id="AY905973">
    <property type="protein sequence ID" value="AAX60319.1"/>
    <property type="molecule type" value="Genomic_DNA"/>
</dbReference>
<dbReference type="EMBL" id="AY905974">
    <property type="protein sequence ID" value="AAX60320.1"/>
    <property type="molecule type" value="Genomic_DNA"/>
</dbReference>
<dbReference type="EMBL" id="AY905975">
    <property type="protein sequence ID" value="AAX60321.1"/>
    <property type="molecule type" value="Genomic_DNA"/>
</dbReference>
<dbReference type="EMBL" id="AY905976">
    <property type="protein sequence ID" value="AAX60322.1"/>
    <property type="molecule type" value="Genomic_DNA"/>
</dbReference>
<dbReference type="EMBL" id="AY905977">
    <property type="protein sequence ID" value="AAX60323.1"/>
    <property type="molecule type" value="Genomic_DNA"/>
</dbReference>
<dbReference type="EMBL" id="AY905978">
    <property type="protein sequence ID" value="AAX60324.1"/>
    <property type="molecule type" value="Genomic_DNA"/>
</dbReference>
<dbReference type="EMBL" id="AY905979">
    <property type="protein sequence ID" value="AAX60325.1"/>
    <property type="molecule type" value="Genomic_DNA"/>
</dbReference>
<dbReference type="EMBL" id="AY905980">
    <property type="protein sequence ID" value="AAX60326.1"/>
    <property type="molecule type" value="Genomic_DNA"/>
</dbReference>
<dbReference type="EMBL" id="AY905981">
    <property type="protein sequence ID" value="AAX60327.1"/>
    <property type="molecule type" value="Genomic_DNA"/>
</dbReference>
<dbReference type="EMBL" id="AY905982">
    <property type="protein sequence ID" value="AAX60328.1"/>
    <property type="molecule type" value="Genomic_DNA"/>
</dbReference>
<dbReference type="EMBL" id="AY905983">
    <property type="protein sequence ID" value="AAX60329.1"/>
    <property type="molecule type" value="Genomic_DNA"/>
</dbReference>
<dbReference type="EMBL" id="AY905984">
    <property type="protein sequence ID" value="AAX60330.1"/>
    <property type="molecule type" value="Genomic_DNA"/>
</dbReference>
<dbReference type="EMBL" id="AY905985">
    <property type="protein sequence ID" value="AAX60331.1"/>
    <property type="molecule type" value="Genomic_DNA"/>
</dbReference>
<dbReference type="EMBL" id="AY905986">
    <property type="protein sequence ID" value="AAX60332.1"/>
    <property type="molecule type" value="Genomic_DNA"/>
</dbReference>
<dbReference type="EMBL" id="AY905987">
    <property type="protein sequence ID" value="AAX60333.1"/>
    <property type="molecule type" value="Genomic_DNA"/>
</dbReference>
<dbReference type="EMBL" id="AY905988">
    <property type="protein sequence ID" value="AAX60334.1"/>
    <property type="molecule type" value="Genomic_DNA"/>
</dbReference>
<dbReference type="EMBL" id="AY905989">
    <property type="protein sequence ID" value="AAX60335.1"/>
    <property type="molecule type" value="Genomic_DNA"/>
</dbReference>
<dbReference type="EMBL" id="AY905990">
    <property type="protein sequence ID" value="AAX60336.1"/>
    <property type="molecule type" value="Genomic_DNA"/>
</dbReference>
<dbReference type="EMBL" id="AY905991">
    <property type="protein sequence ID" value="AAX60337.1"/>
    <property type="molecule type" value="Genomic_DNA"/>
</dbReference>
<dbReference type="EMBL" id="AY905992">
    <property type="protein sequence ID" value="AAX60338.1"/>
    <property type="molecule type" value="Genomic_DNA"/>
</dbReference>
<dbReference type="EMBL" id="AY905993">
    <property type="protein sequence ID" value="AAX60339.1"/>
    <property type="molecule type" value="Genomic_DNA"/>
</dbReference>
<dbReference type="EMBL" id="AY905994">
    <property type="protein sequence ID" value="AAX60340.1"/>
    <property type="molecule type" value="Genomic_DNA"/>
</dbReference>
<dbReference type="EMBL" id="AY905995">
    <property type="protein sequence ID" value="AAX60341.1"/>
    <property type="molecule type" value="Genomic_DNA"/>
</dbReference>
<dbReference type="EMBL" id="AY905996">
    <property type="protein sequence ID" value="AAX60342.1"/>
    <property type="molecule type" value="Genomic_DNA"/>
</dbReference>
<dbReference type="EMBL" id="AY905997">
    <property type="protein sequence ID" value="AAX60343.1"/>
    <property type="molecule type" value="Genomic_DNA"/>
</dbReference>
<dbReference type="EMBL" id="AY905998">
    <property type="protein sequence ID" value="AAX60344.1"/>
    <property type="molecule type" value="Genomic_DNA"/>
</dbReference>
<dbReference type="EMBL" id="AY905999">
    <property type="protein sequence ID" value="AAX60345.1"/>
    <property type="molecule type" value="Genomic_DNA"/>
</dbReference>
<dbReference type="EMBL" id="AY906000">
    <property type="protein sequence ID" value="AAX60346.1"/>
    <property type="molecule type" value="Genomic_DNA"/>
</dbReference>
<dbReference type="EMBL" id="AY906001">
    <property type="protein sequence ID" value="AAX60347.1"/>
    <property type="molecule type" value="Genomic_DNA"/>
</dbReference>
<dbReference type="EMBL" id="AY906002">
    <property type="protein sequence ID" value="AAX60348.1"/>
    <property type="molecule type" value="Genomic_DNA"/>
</dbReference>
<dbReference type="EMBL" id="AY906003">
    <property type="protein sequence ID" value="AAX60349.1"/>
    <property type="molecule type" value="Genomic_DNA"/>
</dbReference>
<dbReference type="EMBL" id="AY906004">
    <property type="protein sequence ID" value="AAX60350.1"/>
    <property type="molecule type" value="Genomic_DNA"/>
</dbReference>
<dbReference type="EMBL" id="AY906005">
    <property type="protein sequence ID" value="AAX60351.1"/>
    <property type="molecule type" value="Genomic_DNA"/>
</dbReference>
<dbReference type="EMBL" id="AY906006">
    <property type="protein sequence ID" value="AAX60352.1"/>
    <property type="molecule type" value="Genomic_DNA"/>
</dbReference>
<dbReference type="EMBL" id="AY906007">
    <property type="protein sequence ID" value="AAX60353.1"/>
    <property type="molecule type" value="Genomic_DNA"/>
</dbReference>
<dbReference type="EMBL" id="AY906008">
    <property type="protein sequence ID" value="AAX60354.1"/>
    <property type="molecule type" value="Genomic_DNA"/>
</dbReference>
<dbReference type="EMBL" id="AY906009">
    <property type="protein sequence ID" value="AAX60355.1"/>
    <property type="molecule type" value="Genomic_DNA"/>
</dbReference>
<dbReference type="EMBL" id="AY906010">
    <property type="protein sequence ID" value="AAX60356.1"/>
    <property type="molecule type" value="Genomic_DNA"/>
</dbReference>
<dbReference type="EMBL" id="AY906011">
    <property type="protein sequence ID" value="AAX60357.1"/>
    <property type="molecule type" value="Genomic_DNA"/>
</dbReference>
<dbReference type="EMBL" id="AY906012">
    <property type="protein sequence ID" value="AAX60358.1"/>
    <property type="molecule type" value="Genomic_DNA"/>
</dbReference>
<dbReference type="EMBL" id="AY906013">
    <property type="protein sequence ID" value="AAX60359.1"/>
    <property type="molecule type" value="Genomic_DNA"/>
</dbReference>
<dbReference type="EMBL" id="AY906014">
    <property type="protein sequence ID" value="AAX60360.1"/>
    <property type="molecule type" value="Genomic_DNA"/>
</dbReference>
<dbReference type="EMBL" id="AY906015">
    <property type="protein sequence ID" value="AAX60361.1"/>
    <property type="molecule type" value="Genomic_DNA"/>
</dbReference>
<dbReference type="EMBL" id="AY906016">
    <property type="protein sequence ID" value="AAX60362.1"/>
    <property type="molecule type" value="Genomic_DNA"/>
</dbReference>
<dbReference type="EMBL" id="AY906017">
    <property type="protein sequence ID" value="AAX60363.1"/>
    <property type="molecule type" value="Genomic_DNA"/>
</dbReference>
<dbReference type="EMBL" id="AY906018">
    <property type="protein sequence ID" value="AAX60364.1"/>
    <property type="molecule type" value="Genomic_DNA"/>
</dbReference>
<dbReference type="EMBL" id="AY906019">
    <property type="protein sequence ID" value="AAX60365.1"/>
    <property type="molecule type" value="Genomic_DNA"/>
</dbReference>
<dbReference type="EMBL" id="AY906020">
    <property type="protein sequence ID" value="AAX60366.1"/>
    <property type="molecule type" value="Genomic_DNA"/>
</dbReference>
<dbReference type="EMBL" id="AY906021">
    <property type="protein sequence ID" value="AAX60367.1"/>
    <property type="molecule type" value="Genomic_DNA"/>
</dbReference>
<dbReference type="EMBL" id="AY906022">
    <property type="protein sequence ID" value="AAX60368.1"/>
    <property type="molecule type" value="Genomic_DNA"/>
</dbReference>
<dbReference type="EMBL" id="AY906023">
    <property type="protein sequence ID" value="AAX60369.1"/>
    <property type="molecule type" value="Genomic_DNA"/>
</dbReference>
<dbReference type="EMBL" id="AY906024">
    <property type="protein sequence ID" value="AAX60370.1"/>
    <property type="molecule type" value="Genomic_DNA"/>
</dbReference>
<dbReference type="EMBL" id="AY906025">
    <property type="protein sequence ID" value="AAX60371.1"/>
    <property type="molecule type" value="Genomic_DNA"/>
</dbReference>
<dbReference type="EMBL" id="AY906026">
    <property type="protein sequence ID" value="AAX60372.1"/>
    <property type="molecule type" value="Genomic_DNA"/>
</dbReference>
<dbReference type="EMBL" id="AY906027">
    <property type="protein sequence ID" value="AAX60373.1"/>
    <property type="molecule type" value="Genomic_DNA"/>
</dbReference>
<dbReference type="EMBL" id="AY906028">
    <property type="protein sequence ID" value="AAX60374.1"/>
    <property type="molecule type" value="Genomic_DNA"/>
</dbReference>
<dbReference type="EMBL" id="AY906029">
    <property type="protein sequence ID" value="AAX60375.1"/>
    <property type="molecule type" value="Genomic_DNA"/>
</dbReference>
<dbReference type="EMBL" id="AY906030">
    <property type="protein sequence ID" value="AAX60376.1"/>
    <property type="molecule type" value="Genomic_DNA"/>
</dbReference>
<dbReference type="EMBL" id="AY906031">
    <property type="protein sequence ID" value="AAX60377.1"/>
    <property type="molecule type" value="Genomic_DNA"/>
</dbReference>
<dbReference type="EMBL" id="AY906032">
    <property type="protein sequence ID" value="AAX60378.1"/>
    <property type="molecule type" value="Genomic_DNA"/>
</dbReference>
<dbReference type="EMBL" id="AY906033">
    <property type="protein sequence ID" value="AAX60379.1"/>
    <property type="molecule type" value="Genomic_DNA"/>
</dbReference>
<dbReference type="EMBL" id="AY906034">
    <property type="protein sequence ID" value="AAX60380.1"/>
    <property type="molecule type" value="Genomic_DNA"/>
</dbReference>
<dbReference type="EMBL" id="AY906035">
    <property type="protein sequence ID" value="AAX60381.1"/>
    <property type="molecule type" value="Genomic_DNA"/>
</dbReference>
<dbReference type="EMBL" id="AY906036">
    <property type="protein sequence ID" value="AAX60382.1"/>
    <property type="molecule type" value="Genomic_DNA"/>
</dbReference>
<dbReference type="EMBL" id="AY906037">
    <property type="protein sequence ID" value="AAX60383.1"/>
    <property type="molecule type" value="Genomic_DNA"/>
</dbReference>
<dbReference type="EMBL" id="AY906038">
    <property type="protein sequence ID" value="AAX60384.1"/>
    <property type="molecule type" value="Genomic_DNA"/>
</dbReference>
<dbReference type="EMBL" id="AY906039">
    <property type="protein sequence ID" value="AAX60385.1"/>
    <property type="molecule type" value="Genomic_DNA"/>
</dbReference>
<dbReference type="EMBL" id="AY906040">
    <property type="protein sequence ID" value="AAX60386.1"/>
    <property type="molecule type" value="Genomic_DNA"/>
</dbReference>
<dbReference type="EMBL" id="AY906041">
    <property type="protein sequence ID" value="AAX60387.1"/>
    <property type="molecule type" value="Genomic_DNA"/>
</dbReference>
<dbReference type="EMBL" id="AY906042">
    <property type="protein sequence ID" value="AAX60388.1"/>
    <property type="molecule type" value="Genomic_DNA"/>
</dbReference>
<dbReference type="EMBL" id="AY906043">
    <property type="protein sequence ID" value="AAX60389.1"/>
    <property type="molecule type" value="Genomic_DNA"/>
</dbReference>
<dbReference type="EMBL" id="AY906044">
    <property type="protein sequence ID" value="AAX60390.1"/>
    <property type="molecule type" value="Genomic_DNA"/>
</dbReference>
<dbReference type="EMBL" id="AY906045">
    <property type="protein sequence ID" value="AAX60391.1"/>
    <property type="molecule type" value="Genomic_DNA"/>
</dbReference>
<dbReference type="EMBL" id="AY906046">
    <property type="protein sequence ID" value="AAX60392.1"/>
    <property type="molecule type" value="Genomic_DNA"/>
</dbReference>
<dbReference type="EMBL" id="AY906047">
    <property type="protein sequence ID" value="AAX60393.1"/>
    <property type="molecule type" value="Genomic_DNA"/>
</dbReference>
<dbReference type="EMBL" id="AY906048">
    <property type="protein sequence ID" value="AAX60394.1"/>
    <property type="molecule type" value="Genomic_DNA"/>
</dbReference>
<dbReference type="EMBL" id="AY906049">
    <property type="protein sequence ID" value="AAX60395.1"/>
    <property type="molecule type" value="Genomic_DNA"/>
</dbReference>
<dbReference type="EMBL" id="AY906050">
    <property type="protein sequence ID" value="AAX60396.1"/>
    <property type="molecule type" value="Genomic_DNA"/>
</dbReference>
<dbReference type="EMBL" id="AY906051">
    <property type="protein sequence ID" value="AAX60397.1"/>
    <property type="molecule type" value="Genomic_DNA"/>
</dbReference>
<dbReference type="EMBL" id="AY906052">
    <property type="protein sequence ID" value="AAX60398.1"/>
    <property type="molecule type" value="Genomic_DNA"/>
</dbReference>
<dbReference type="EMBL" id="AY906053">
    <property type="protein sequence ID" value="AAX60399.1"/>
    <property type="molecule type" value="Genomic_DNA"/>
</dbReference>
<dbReference type="EMBL" id="AY906054">
    <property type="protein sequence ID" value="AAX60400.1"/>
    <property type="molecule type" value="Genomic_DNA"/>
</dbReference>
<dbReference type="EMBL" id="AY906055">
    <property type="protein sequence ID" value="AAX60401.1"/>
    <property type="molecule type" value="Genomic_DNA"/>
</dbReference>
<dbReference type="EMBL" id="AY906056">
    <property type="protein sequence ID" value="AAX60402.1"/>
    <property type="molecule type" value="Genomic_DNA"/>
</dbReference>
<dbReference type="EMBL" id="AY906057">
    <property type="protein sequence ID" value="AAX60403.1"/>
    <property type="molecule type" value="Genomic_DNA"/>
</dbReference>
<dbReference type="EMBL" id="AY906058">
    <property type="protein sequence ID" value="AAX60404.1"/>
    <property type="molecule type" value="Genomic_DNA"/>
</dbReference>
<dbReference type="EMBL" id="AY906059">
    <property type="protein sequence ID" value="AAX60405.1"/>
    <property type="molecule type" value="Genomic_DNA"/>
</dbReference>
<dbReference type="EMBL" id="AY906060">
    <property type="protein sequence ID" value="AAX60406.1"/>
    <property type="molecule type" value="Genomic_DNA"/>
</dbReference>
<dbReference type="EMBL" id="AY906061">
    <property type="protein sequence ID" value="AAX60407.1"/>
    <property type="molecule type" value="Genomic_DNA"/>
</dbReference>
<dbReference type="EMBL" id="AY906062">
    <property type="protein sequence ID" value="AAX60408.1"/>
    <property type="molecule type" value="Genomic_DNA"/>
</dbReference>
<dbReference type="EMBL" id="AY906063">
    <property type="protein sequence ID" value="AAX60409.1"/>
    <property type="molecule type" value="Genomic_DNA"/>
</dbReference>
<dbReference type="EMBL" id="AY906064">
    <property type="protein sequence ID" value="AAX60410.1"/>
    <property type="molecule type" value="Genomic_DNA"/>
</dbReference>
<dbReference type="EMBL" id="AY906065">
    <property type="protein sequence ID" value="AAX60411.1"/>
    <property type="molecule type" value="Genomic_DNA"/>
</dbReference>
<dbReference type="EMBL" id="AY906066">
    <property type="protein sequence ID" value="AAX60412.1"/>
    <property type="molecule type" value="Genomic_DNA"/>
</dbReference>
<dbReference type="EMBL" id="AY906067">
    <property type="protein sequence ID" value="AAX60413.1"/>
    <property type="molecule type" value="Genomic_DNA"/>
</dbReference>
<dbReference type="EMBL" id="AY906068">
    <property type="protein sequence ID" value="AAX60414.1"/>
    <property type="molecule type" value="Genomic_DNA"/>
</dbReference>
<dbReference type="EMBL" id="AY906069">
    <property type="protein sequence ID" value="AAX60415.1"/>
    <property type="molecule type" value="Genomic_DNA"/>
</dbReference>
<dbReference type="EMBL" id="AY906070">
    <property type="protein sequence ID" value="AAX60416.1"/>
    <property type="molecule type" value="Genomic_DNA"/>
</dbReference>
<dbReference type="EMBL" id="AY906071">
    <property type="protein sequence ID" value="AAX60417.1"/>
    <property type="molecule type" value="Genomic_DNA"/>
</dbReference>
<dbReference type="EMBL" id="AY906072">
    <property type="protein sequence ID" value="AAX60418.1"/>
    <property type="molecule type" value="Genomic_DNA"/>
</dbReference>
<dbReference type="EMBL" id="AY906073">
    <property type="protein sequence ID" value="AAX60419.1"/>
    <property type="molecule type" value="Genomic_DNA"/>
</dbReference>
<dbReference type="EMBL" id="AY906074">
    <property type="protein sequence ID" value="AAX60420.1"/>
    <property type="molecule type" value="Genomic_DNA"/>
</dbReference>
<dbReference type="EMBL" id="AY906075">
    <property type="protein sequence ID" value="AAX60421.1"/>
    <property type="molecule type" value="Genomic_DNA"/>
</dbReference>
<dbReference type="EMBL" id="AY906076">
    <property type="protein sequence ID" value="AAX60422.1"/>
    <property type="molecule type" value="Genomic_DNA"/>
</dbReference>
<dbReference type="EMBL" id="AY906077">
    <property type="protein sequence ID" value="AAX60423.1"/>
    <property type="molecule type" value="Genomic_DNA"/>
</dbReference>
<dbReference type="EMBL" id="AY906078">
    <property type="protein sequence ID" value="AAX60424.1"/>
    <property type="molecule type" value="Genomic_DNA"/>
</dbReference>
<dbReference type="EMBL" id="AY906079">
    <property type="protein sequence ID" value="AAX60425.1"/>
    <property type="molecule type" value="Genomic_DNA"/>
</dbReference>
<dbReference type="EMBL" id="AY906080">
    <property type="protein sequence ID" value="AAX60426.1"/>
    <property type="molecule type" value="Genomic_DNA"/>
</dbReference>
<dbReference type="EMBL" id="AY906081">
    <property type="protein sequence ID" value="AAX60427.1"/>
    <property type="molecule type" value="Genomic_DNA"/>
</dbReference>
<dbReference type="EMBL" id="AY906082">
    <property type="protein sequence ID" value="AAX60428.1"/>
    <property type="molecule type" value="Genomic_DNA"/>
</dbReference>
<dbReference type="EMBL" id="AY906083">
    <property type="protein sequence ID" value="AAX60429.1"/>
    <property type="molecule type" value="Genomic_DNA"/>
</dbReference>
<dbReference type="EMBL" id="AY906084">
    <property type="protein sequence ID" value="AAX60430.1"/>
    <property type="molecule type" value="Genomic_DNA"/>
</dbReference>
<dbReference type="EMBL" id="AY906085">
    <property type="protein sequence ID" value="AAX60431.1"/>
    <property type="molecule type" value="Genomic_DNA"/>
</dbReference>
<dbReference type="EMBL" id="AY906086">
    <property type="protein sequence ID" value="AAX60432.1"/>
    <property type="molecule type" value="Genomic_DNA"/>
</dbReference>
<dbReference type="EMBL" id="AY906087">
    <property type="protein sequence ID" value="AAX60433.1"/>
    <property type="molecule type" value="Genomic_DNA"/>
</dbReference>
<dbReference type="EMBL" id="AY906088">
    <property type="protein sequence ID" value="AAX60434.1"/>
    <property type="molecule type" value="Genomic_DNA"/>
</dbReference>
<dbReference type="EMBL" id="AY906089">
    <property type="protein sequence ID" value="AAX60435.1"/>
    <property type="molecule type" value="Genomic_DNA"/>
</dbReference>
<dbReference type="EMBL" id="AY906090">
    <property type="protein sequence ID" value="AAX60436.1"/>
    <property type="molecule type" value="Genomic_DNA"/>
</dbReference>
<dbReference type="EMBL" id="AY906091">
    <property type="protein sequence ID" value="AAX60437.1"/>
    <property type="molecule type" value="Genomic_DNA"/>
</dbReference>
<dbReference type="EMBL" id="AY906092">
    <property type="protein sequence ID" value="AAX60438.1"/>
    <property type="molecule type" value="Genomic_DNA"/>
</dbReference>
<dbReference type="EMBL" id="AY906093">
    <property type="protein sequence ID" value="AAX60439.1"/>
    <property type="molecule type" value="Genomic_DNA"/>
</dbReference>
<dbReference type="EMBL" id="AY906094">
    <property type="protein sequence ID" value="AAX60440.1"/>
    <property type="molecule type" value="Genomic_DNA"/>
</dbReference>
<dbReference type="EMBL" id="AY906095">
    <property type="protein sequence ID" value="AAX60441.1"/>
    <property type="molecule type" value="Genomic_DNA"/>
</dbReference>
<dbReference type="EMBL" id="AY906096">
    <property type="protein sequence ID" value="AAX60442.1"/>
    <property type="molecule type" value="Genomic_DNA"/>
</dbReference>
<dbReference type="EMBL" id="AY906098">
    <property type="protein sequence ID" value="AAX60444.1"/>
    <property type="molecule type" value="Genomic_DNA"/>
</dbReference>
<dbReference type="EMBL" id="AY906099">
    <property type="protein sequence ID" value="AAX60445.1"/>
    <property type="molecule type" value="Genomic_DNA"/>
</dbReference>
<dbReference type="EMBL" id="AY906100">
    <property type="protein sequence ID" value="AAX60446.1"/>
    <property type="molecule type" value="Genomic_DNA"/>
</dbReference>
<dbReference type="EMBL" id="AY906101">
    <property type="protein sequence ID" value="AAX60447.1"/>
    <property type="molecule type" value="Genomic_DNA"/>
</dbReference>
<dbReference type="EMBL" id="AY906102">
    <property type="protein sequence ID" value="AAX60448.1"/>
    <property type="molecule type" value="Genomic_DNA"/>
</dbReference>
<dbReference type="EMBL" id="AY906103">
    <property type="protein sequence ID" value="AAX60449.1"/>
    <property type="molecule type" value="Genomic_DNA"/>
</dbReference>
<dbReference type="EMBL" id="AY906104">
    <property type="protein sequence ID" value="AAX60450.1"/>
    <property type="molecule type" value="Genomic_DNA"/>
</dbReference>
<dbReference type="EMBL" id="AY906105">
    <property type="protein sequence ID" value="AAX60451.1"/>
    <property type="molecule type" value="Genomic_DNA"/>
</dbReference>
<dbReference type="EMBL" id="AY906106">
    <property type="protein sequence ID" value="AAX60452.1"/>
    <property type="molecule type" value="Genomic_DNA"/>
</dbReference>
<dbReference type="EMBL" id="AY906107">
    <property type="protein sequence ID" value="AAX60453.1"/>
    <property type="molecule type" value="Genomic_DNA"/>
</dbReference>
<dbReference type="EMBL" id="AY906108">
    <property type="protein sequence ID" value="AAX60454.1"/>
    <property type="molecule type" value="Genomic_DNA"/>
</dbReference>
<dbReference type="EMBL" id="AY906109">
    <property type="protein sequence ID" value="AAX60455.1"/>
    <property type="molecule type" value="Genomic_DNA"/>
</dbReference>
<dbReference type="EMBL" id="AY906110">
    <property type="protein sequence ID" value="AAX60456.1"/>
    <property type="molecule type" value="Genomic_DNA"/>
</dbReference>
<dbReference type="EMBL" id="AY906111">
    <property type="protein sequence ID" value="AAX60457.1"/>
    <property type="molecule type" value="Genomic_DNA"/>
</dbReference>
<dbReference type="EMBL" id="AY906112">
    <property type="protein sequence ID" value="AAX60458.1"/>
    <property type="molecule type" value="Genomic_DNA"/>
</dbReference>
<dbReference type="EMBL" id="AY906113">
    <property type="protein sequence ID" value="AAX60459.1"/>
    <property type="molecule type" value="Genomic_DNA"/>
</dbReference>
<dbReference type="EMBL" id="AY906114">
    <property type="protein sequence ID" value="AAX60460.1"/>
    <property type="molecule type" value="Genomic_DNA"/>
</dbReference>
<dbReference type="EMBL" id="AY906115">
    <property type="protein sequence ID" value="AAX60461.1"/>
    <property type="molecule type" value="Genomic_DNA"/>
</dbReference>
<dbReference type="EMBL" id="AY906116">
    <property type="protein sequence ID" value="AAX60462.1"/>
    <property type="molecule type" value="Genomic_DNA"/>
</dbReference>
<dbReference type="EMBL" id="AY906117">
    <property type="protein sequence ID" value="AAX60463.1"/>
    <property type="molecule type" value="Genomic_DNA"/>
</dbReference>
<dbReference type="EMBL" id="AY906118">
    <property type="protein sequence ID" value="AAX60464.1"/>
    <property type="molecule type" value="Genomic_DNA"/>
</dbReference>
<dbReference type="EMBL" id="AY906119">
    <property type="protein sequence ID" value="AAX60465.1"/>
    <property type="molecule type" value="Genomic_DNA"/>
</dbReference>
<dbReference type="EMBL" id="AY906120">
    <property type="protein sequence ID" value="AAX60466.1"/>
    <property type="molecule type" value="Genomic_DNA"/>
</dbReference>
<dbReference type="EMBL" id="AY906121">
    <property type="protein sequence ID" value="AAX60467.1"/>
    <property type="molecule type" value="Genomic_DNA"/>
</dbReference>
<dbReference type="EMBL" id="AY906122">
    <property type="protein sequence ID" value="AAX60468.1"/>
    <property type="molecule type" value="Genomic_DNA"/>
</dbReference>
<dbReference type="EMBL" id="AY906123">
    <property type="protein sequence ID" value="AAX60469.1"/>
    <property type="molecule type" value="Genomic_DNA"/>
</dbReference>
<dbReference type="EMBL" id="AY906124">
    <property type="protein sequence ID" value="AAX60470.1"/>
    <property type="molecule type" value="Genomic_DNA"/>
</dbReference>
<dbReference type="EMBL" id="AY906125">
    <property type="protein sequence ID" value="AAX60471.1"/>
    <property type="molecule type" value="Genomic_DNA"/>
</dbReference>
<dbReference type="EMBL" id="AY906126">
    <property type="protein sequence ID" value="AAX60472.1"/>
    <property type="molecule type" value="Genomic_DNA"/>
</dbReference>
<dbReference type="EMBL" id="AY906127">
    <property type="protein sequence ID" value="AAX60473.1"/>
    <property type="molecule type" value="Genomic_DNA"/>
</dbReference>
<dbReference type="EMBL" id="AY906128">
    <property type="protein sequence ID" value="AAX60474.1"/>
    <property type="molecule type" value="Genomic_DNA"/>
</dbReference>
<dbReference type="EMBL" id="AY906129">
    <property type="protein sequence ID" value="AAX60475.1"/>
    <property type="molecule type" value="Genomic_DNA"/>
</dbReference>
<dbReference type="EMBL" id="AY906130">
    <property type="protein sequence ID" value="AAX60476.1"/>
    <property type="molecule type" value="Genomic_DNA"/>
</dbReference>
<dbReference type="EMBL" id="AY906131">
    <property type="protein sequence ID" value="AAX60477.1"/>
    <property type="molecule type" value="Genomic_DNA"/>
</dbReference>
<dbReference type="EMBL" id="AY906132">
    <property type="protein sequence ID" value="AAX60478.1"/>
    <property type="molecule type" value="Genomic_DNA"/>
</dbReference>
<dbReference type="EMBL" id="AY906133">
    <property type="protein sequence ID" value="AAX60479.1"/>
    <property type="molecule type" value="Genomic_DNA"/>
</dbReference>
<dbReference type="EMBL" id="AY906134">
    <property type="protein sequence ID" value="AAX60480.1"/>
    <property type="molecule type" value="Genomic_DNA"/>
</dbReference>
<dbReference type="EMBL" id="AY906135">
    <property type="protein sequence ID" value="AAX60481.1"/>
    <property type="molecule type" value="Genomic_DNA"/>
</dbReference>
<dbReference type="EMBL" id="AY906136">
    <property type="protein sequence ID" value="AAX60482.1"/>
    <property type="molecule type" value="Genomic_DNA"/>
</dbReference>
<dbReference type="EMBL" id="AY906137">
    <property type="protein sequence ID" value="AAX60483.1"/>
    <property type="molecule type" value="Genomic_DNA"/>
</dbReference>
<dbReference type="EMBL" id="AY906138">
    <property type="protein sequence ID" value="AAX60484.1"/>
    <property type="molecule type" value="Genomic_DNA"/>
</dbReference>
<dbReference type="EMBL" id="AY906139">
    <property type="protein sequence ID" value="AAX60485.1"/>
    <property type="molecule type" value="Genomic_DNA"/>
</dbReference>
<dbReference type="EMBL" id="AY906140">
    <property type="protein sequence ID" value="AAX60486.1"/>
    <property type="molecule type" value="Genomic_DNA"/>
</dbReference>
<dbReference type="EMBL" id="AY906141">
    <property type="protein sequence ID" value="AAX60487.1"/>
    <property type="molecule type" value="Genomic_DNA"/>
</dbReference>
<dbReference type="EMBL" id="AY906142">
    <property type="protein sequence ID" value="AAX60488.1"/>
    <property type="molecule type" value="Genomic_DNA"/>
</dbReference>
<dbReference type="EMBL" id="AY906143">
    <property type="protein sequence ID" value="AAX60489.1"/>
    <property type="molecule type" value="Genomic_DNA"/>
</dbReference>
<dbReference type="EMBL" id="AY906144">
    <property type="protein sequence ID" value="AAX60490.1"/>
    <property type="molecule type" value="Genomic_DNA"/>
</dbReference>
<dbReference type="EMBL" id="AY906145">
    <property type="protein sequence ID" value="AAX60491.1"/>
    <property type="molecule type" value="Genomic_DNA"/>
</dbReference>
<dbReference type="EMBL" id="AY906146">
    <property type="protein sequence ID" value="AAX60492.1"/>
    <property type="molecule type" value="Genomic_DNA"/>
</dbReference>
<dbReference type="EMBL" id="AY906147">
    <property type="protein sequence ID" value="AAX60493.1"/>
    <property type="molecule type" value="Genomic_DNA"/>
</dbReference>
<dbReference type="EMBL" id="AY906148">
    <property type="protein sequence ID" value="AAX60494.1"/>
    <property type="molecule type" value="Genomic_DNA"/>
</dbReference>
<dbReference type="EMBL" id="AY906149">
    <property type="protein sequence ID" value="AAX60495.1"/>
    <property type="molecule type" value="Genomic_DNA"/>
</dbReference>
<dbReference type="EMBL" id="AY906150">
    <property type="protein sequence ID" value="AAX60496.1"/>
    <property type="molecule type" value="Genomic_DNA"/>
</dbReference>
<dbReference type="EMBL" id="AY906151">
    <property type="protein sequence ID" value="AAX60497.1"/>
    <property type="molecule type" value="Genomic_DNA"/>
</dbReference>
<dbReference type="EMBL" id="AY906152">
    <property type="protein sequence ID" value="AAX60498.1"/>
    <property type="molecule type" value="Genomic_DNA"/>
</dbReference>
<dbReference type="EMBL" id="AY906153">
    <property type="protein sequence ID" value="AAX60499.1"/>
    <property type="molecule type" value="Genomic_DNA"/>
</dbReference>
<dbReference type="EMBL" id="AY906154">
    <property type="protein sequence ID" value="AAX60500.1"/>
    <property type="molecule type" value="Genomic_DNA"/>
</dbReference>
<dbReference type="EMBL" id="AY906155">
    <property type="protein sequence ID" value="AAX60501.1"/>
    <property type="molecule type" value="Genomic_DNA"/>
</dbReference>
<dbReference type="EMBL" id="AY906156">
    <property type="protein sequence ID" value="AAX60502.1"/>
    <property type="molecule type" value="Genomic_DNA"/>
</dbReference>
<dbReference type="EMBL" id="AY906157">
    <property type="protein sequence ID" value="AAX60503.1"/>
    <property type="molecule type" value="Genomic_DNA"/>
</dbReference>
<dbReference type="EMBL" id="AY906158">
    <property type="protein sequence ID" value="AAX60504.1"/>
    <property type="molecule type" value="Genomic_DNA"/>
</dbReference>
<dbReference type="EMBL" id="AY906159">
    <property type="protein sequence ID" value="AAX60505.1"/>
    <property type="molecule type" value="Genomic_DNA"/>
</dbReference>
<dbReference type="EMBL" id="AY906160">
    <property type="protein sequence ID" value="AAX60506.1"/>
    <property type="molecule type" value="Genomic_DNA"/>
</dbReference>
<dbReference type="EMBL" id="AY906161">
    <property type="protein sequence ID" value="AAX60507.1"/>
    <property type="molecule type" value="Genomic_DNA"/>
</dbReference>
<dbReference type="EMBL" id="AY906162">
    <property type="protein sequence ID" value="AAX60508.1"/>
    <property type="molecule type" value="Genomic_DNA"/>
</dbReference>
<dbReference type="EMBL" id="AY906163">
    <property type="protein sequence ID" value="AAX60509.1"/>
    <property type="molecule type" value="Genomic_DNA"/>
</dbReference>
<dbReference type="EMBL" id="AY906164">
    <property type="protein sequence ID" value="AAX60510.1"/>
    <property type="molecule type" value="Genomic_DNA"/>
</dbReference>
<dbReference type="EMBL" id="AY906165">
    <property type="protein sequence ID" value="AAX60511.1"/>
    <property type="molecule type" value="Genomic_DNA"/>
</dbReference>
<dbReference type="EMBL" id="AY906166">
    <property type="protein sequence ID" value="AAX60512.1"/>
    <property type="molecule type" value="Genomic_DNA"/>
</dbReference>
<dbReference type="EMBL" id="AY906167">
    <property type="protein sequence ID" value="AAX60513.1"/>
    <property type="molecule type" value="Genomic_DNA"/>
</dbReference>
<dbReference type="EMBL" id="AY906168">
    <property type="protein sequence ID" value="AAX60514.1"/>
    <property type="molecule type" value="Genomic_DNA"/>
</dbReference>
<dbReference type="EMBL" id="AY906169">
    <property type="protein sequence ID" value="AAX60515.1"/>
    <property type="molecule type" value="Genomic_DNA"/>
</dbReference>
<dbReference type="EMBL" id="AY906170">
    <property type="protein sequence ID" value="AAX60516.1"/>
    <property type="molecule type" value="Genomic_DNA"/>
</dbReference>
<dbReference type="EMBL" id="AY906171">
    <property type="protein sequence ID" value="AAX60517.1"/>
    <property type="molecule type" value="Genomic_DNA"/>
</dbReference>
<dbReference type="EMBL" id="AY906172">
    <property type="protein sequence ID" value="AAX60518.1"/>
    <property type="molecule type" value="Genomic_DNA"/>
</dbReference>
<dbReference type="EMBL" id="AY906173">
    <property type="protein sequence ID" value="AAX60519.1"/>
    <property type="molecule type" value="Genomic_DNA"/>
</dbReference>
<dbReference type="EMBL" id="AY906174">
    <property type="protein sequence ID" value="AAX60520.1"/>
    <property type="molecule type" value="Genomic_DNA"/>
</dbReference>
<dbReference type="EMBL" id="AY906175">
    <property type="protein sequence ID" value="AAX60521.1"/>
    <property type="molecule type" value="Genomic_DNA"/>
</dbReference>
<dbReference type="EMBL" id="AY906176">
    <property type="protein sequence ID" value="AAX60522.1"/>
    <property type="molecule type" value="Genomic_DNA"/>
</dbReference>
<dbReference type="EMBL" id="AY906177">
    <property type="protein sequence ID" value="AAX60523.1"/>
    <property type="molecule type" value="Genomic_DNA"/>
</dbReference>
<dbReference type="EMBL" id="AY906178">
    <property type="protein sequence ID" value="AAX60524.1"/>
    <property type="molecule type" value="Genomic_DNA"/>
</dbReference>
<dbReference type="EMBL" id="AY906179">
    <property type="protein sequence ID" value="AAX60525.1"/>
    <property type="molecule type" value="Genomic_DNA"/>
</dbReference>
<dbReference type="EMBL" id="AY906180">
    <property type="protein sequence ID" value="AAX60526.1"/>
    <property type="molecule type" value="Genomic_DNA"/>
</dbReference>
<dbReference type="EMBL" id="AY906181">
    <property type="protein sequence ID" value="AAX60527.1"/>
    <property type="molecule type" value="Genomic_DNA"/>
</dbReference>
<dbReference type="EMBL" id="AY906182">
    <property type="protein sequence ID" value="AAX60528.1"/>
    <property type="molecule type" value="Genomic_DNA"/>
</dbReference>
<dbReference type="EMBL" id="AY906183">
    <property type="protein sequence ID" value="AAX60529.1"/>
    <property type="molecule type" value="Genomic_DNA"/>
</dbReference>
<dbReference type="EMBL" id="AY906184">
    <property type="protein sequence ID" value="AAX60530.1"/>
    <property type="molecule type" value="Genomic_DNA"/>
</dbReference>
<dbReference type="EMBL" id="AY906185">
    <property type="protein sequence ID" value="AAX60531.1"/>
    <property type="molecule type" value="Genomic_DNA"/>
</dbReference>
<dbReference type="EMBL" id="AY906186">
    <property type="protein sequence ID" value="AAX60532.1"/>
    <property type="molecule type" value="Genomic_DNA"/>
</dbReference>
<dbReference type="EMBL" id="AY906187">
    <property type="protein sequence ID" value="AAX60533.1"/>
    <property type="molecule type" value="Genomic_DNA"/>
</dbReference>
<dbReference type="EMBL" id="AY906188">
    <property type="protein sequence ID" value="AAX60534.1"/>
    <property type="molecule type" value="Genomic_DNA"/>
</dbReference>
<dbReference type="EMBL" id="AY906189">
    <property type="protein sequence ID" value="AAX60535.1"/>
    <property type="molecule type" value="Genomic_DNA"/>
</dbReference>
<dbReference type="EMBL" id="AY906190">
    <property type="protein sequence ID" value="AAX60536.1"/>
    <property type="molecule type" value="Genomic_DNA"/>
</dbReference>
<dbReference type="EMBL" id="AY906191">
    <property type="protein sequence ID" value="AAX60537.1"/>
    <property type="molecule type" value="Genomic_DNA"/>
</dbReference>
<dbReference type="EMBL" id="AY906192">
    <property type="protein sequence ID" value="AAX60538.1"/>
    <property type="molecule type" value="Genomic_DNA"/>
</dbReference>
<dbReference type="EMBL" id="AY906193">
    <property type="protein sequence ID" value="AAX60539.1"/>
    <property type="molecule type" value="Genomic_DNA"/>
</dbReference>
<dbReference type="EMBL" id="AY906194">
    <property type="protein sequence ID" value="AAX60540.1"/>
    <property type="molecule type" value="Genomic_DNA"/>
</dbReference>
<dbReference type="EMBL" id="AY906195">
    <property type="protein sequence ID" value="AAX60541.1"/>
    <property type="molecule type" value="Genomic_DNA"/>
</dbReference>
<dbReference type="EMBL" id="AY906196">
    <property type="protein sequence ID" value="AAX60542.1"/>
    <property type="molecule type" value="Genomic_DNA"/>
</dbReference>
<dbReference type="EMBL" id="AY906197">
    <property type="protein sequence ID" value="AAX60543.1"/>
    <property type="molecule type" value="Genomic_DNA"/>
</dbReference>
<dbReference type="EMBL" id="AY906198">
    <property type="protein sequence ID" value="AAX60544.1"/>
    <property type="molecule type" value="Genomic_DNA"/>
</dbReference>
<dbReference type="EMBL" id="AY906199">
    <property type="protein sequence ID" value="AAX60545.1"/>
    <property type="molecule type" value="Genomic_DNA"/>
</dbReference>
<dbReference type="EMBL" id="AY906200">
    <property type="protein sequence ID" value="AAX60546.1"/>
    <property type="molecule type" value="Genomic_DNA"/>
</dbReference>
<dbReference type="EMBL" id="AY906201">
    <property type="protein sequence ID" value="AAX60547.1"/>
    <property type="molecule type" value="Genomic_DNA"/>
</dbReference>
<dbReference type="EMBL" id="AY906202">
    <property type="protein sequence ID" value="AAX60548.1"/>
    <property type="molecule type" value="Genomic_DNA"/>
</dbReference>
<dbReference type="EMBL" id="AY906203">
    <property type="protein sequence ID" value="AAX60549.1"/>
    <property type="molecule type" value="Genomic_DNA"/>
</dbReference>
<dbReference type="EMBL" id="AY906204">
    <property type="protein sequence ID" value="AAX60550.1"/>
    <property type="molecule type" value="Genomic_DNA"/>
</dbReference>
<dbReference type="EMBL" id="AY906205">
    <property type="protein sequence ID" value="AAX60551.1"/>
    <property type="molecule type" value="Genomic_DNA"/>
</dbReference>
<dbReference type="EMBL" id="AY906206">
    <property type="protein sequence ID" value="AAX60552.1"/>
    <property type="molecule type" value="Genomic_DNA"/>
</dbReference>
<dbReference type="EMBL" id="AY906207">
    <property type="protein sequence ID" value="AAX60553.1"/>
    <property type="molecule type" value="Genomic_DNA"/>
</dbReference>
<dbReference type="EMBL" id="AY906208">
    <property type="protein sequence ID" value="AAX60554.1"/>
    <property type="molecule type" value="Genomic_DNA"/>
</dbReference>
<dbReference type="EMBL" id="AY906209">
    <property type="protein sequence ID" value="AAX60555.1"/>
    <property type="molecule type" value="Genomic_DNA"/>
</dbReference>
<dbReference type="EMBL" id="AY906210">
    <property type="protein sequence ID" value="AAX60556.1"/>
    <property type="molecule type" value="Genomic_DNA"/>
</dbReference>
<dbReference type="EMBL" id="AY906211">
    <property type="protein sequence ID" value="AAX60557.1"/>
    <property type="molecule type" value="Genomic_DNA"/>
</dbReference>
<dbReference type="EMBL" id="AY906212">
    <property type="protein sequence ID" value="AAX60558.1"/>
    <property type="molecule type" value="Genomic_DNA"/>
</dbReference>
<dbReference type="EMBL" id="AY906213">
    <property type="protein sequence ID" value="AAX60559.1"/>
    <property type="molecule type" value="Genomic_DNA"/>
</dbReference>
<dbReference type="EMBL" id="AY906214">
    <property type="protein sequence ID" value="AAX60560.1"/>
    <property type="molecule type" value="Genomic_DNA"/>
</dbReference>
<dbReference type="EMBL" id="AY906215">
    <property type="protein sequence ID" value="AAX60561.1"/>
    <property type="molecule type" value="Genomic_DNA"/>
</dbReference>
<dbReference type="EMBL" id="AY906216">
    <property type="protein sequence ID" value="AAX60562.1"/>
    <property type="molecule type" value="Genomic_DNA"/>
</dbReference>
<dbReference type="EMBL" id="AY906217">
    <property type="protein sequence ID" value="AAX60563.1"/>
    <property type="molecule type" value="Genomic_DNA"/>
</dbReference>
<dbReference type="EMBL" id="AY906218">
    <property type="protein sequence ID" value="AAX60564.1"/>
    <property type="molecule type" value="Genomic_DNA"/>
</dbReference>
<dbReference type="EMBL" id="AY906219">
    <property type="protein sequence ID" value="AAX60565.1"/>
    <property type="molecule type" value="Genomic_DNA"/>
</dbReference>
<dbReference type="EMBL" id="AY906220">
    <property type="protein sequence ID" value="AAX60566.1"/>
    <property type="molecule type" value="Genomic_DNA"/>
</dbReference>
<dbReference type="EMBL" id="AY906221">
    <property type="protein sequence ID" value="AAX60567.1"/>
    <property type="molecule type" value="Genomic_DNA"/>
</dbReference>
<dbReference type="EMBL" id="AY906222">
    <property type="protein sequence ID" value="AAX60568.1"/>
    <property type="molecule type" value="Genomic_DNA"/>
</dbReference>
<dbReference type="EMBL" id="AY906223">
    <property type="protein sequence ID" value="AAX60569.1"/>
    <property type="molecule type" value="Genomic_DNA"/>
</dbReference>
<dbReference type="EMBL" id="AY906224">
    <property type="protein sequence ID" value="AAX60570.1"/>
    <property type="molecule type" value="Genomic_DNA"/>
</dbReference>
<dbReference type="EMBL" id="AY906225">
    <property type="protein sequence ID" value="AAX60571.1"/>
    <property type="molecule type" value="Genomic_DNA"/>
</dbReference>
<dbReference type="EMBL" id="AY906226">
    <property type="protein sequence ID" value="AAX60572.1"/>
    <property type="molecule type" value="Genomic_DNA"/>
</dbReference>
<dbReference type="EMBL" id="AY906227">
    <property type="protein sequence ID" value="AAX60573.1"/>
    <property type="molecule type" value="Genomic_DNA"/>
</dbReference>
<dbReference type="EMBL" id="AY906228">
    <property type="protein sequence ID" value="AAX60574.1"/>
    <property type="molecule type" value="Genomic_DNA"/>
</dbReference>
<dbReference type="EMBL" id="AY906229">
    <property type="protein sequence ID" value="AAX60575.1"/>
    <property type="molecule type" value="Genomic_DNA"/>
</dbReference>
<dbReference type="EMBL" id="AY906230">
    <property type="protein sequence ID" value="AAX60576.1"/>
    <property type="molecule type" value="Genomic_DNA"/>
</dbReference>
<dbReference type="EMBL" id="AY906231">
    <property type="protein sequence ID" value="AAX60577.1"/>
    <property type="molecule type" value="Genomic_DNA"/>
</dbReference>
<dbReference type="EMBL" id="AY906232">
    <property type="protein sequence ID" value="AAX60578.1"/>
    <property type="molecule type" value="Genomic_DNA"/>
</dbReference>
<dbReference type="EMBL" id="AY906233">
    <property type="protein sequence ID" value="AAX60579.1"/>
    <property type="molecule type" value="Genomic_DNA"/>
</dbReference>
<dbReference type="EMBL" id="AY906234">
    <property type="protein sequence ID" value="AAX60580.1"/>
    <property type="molecule type" value="Genomic_DNA"/>
</dbReference>
<dbReference type="EMBL" id="AY906235">
    <property type="protein sequence ID" value="AAX60581.1"/>
    <property type="molecule type" value="Genomic_DNA"/>
</dbReference>
<dbReference type="EMBL" id="AY906236">
    <property type="protein sequence ID" value="AAX60582.1"/>
    <property type="molecule type" value="Genomic_DNA"/>
</dbReference>
<dbReference type="EMBL" id="AY906237">
    <property type="protein sequence ID" value="AAX60583.1"/>
    <property type="molecule type" value="Genomic_DNA"/>
</dbReference>
<dbReference type="EMBL" id="AY906238">
    <property type="protein sequence ID" value="AAX60584.1"/>
    <property type="molecule type" value="Genomic_DNA"/>
</dbReference>
<dbReference type="EMBL" id="AY906239">
    <property type="protein sequence ID" value="AAX60585.1"/>
    <property type="molecule type" value="Genomic_DNA"/>
</dbReference>
<dbReference type="EMBL" id="AY906240">
    <property type="protein sequence ID" value="AAX60586.1"/>
    <property type="molecule type" value="Genomic_DNA"/>
</dbReference>
<dbReference type="EMBL" id="AY906241">
    <property type="protein sequence ID" value="AAX60587.1"/>
    <property type="molecule type" value="Genomic_DNA"/>
</dbReference>
<dbReference type="EMBL" id="AY906242">
    <property type="protein sequence ID" value="AAX60588.1"/>
    <property type="molecule type" value="Genomic_DNA"/>
</dbReference>
<dbReference type="EMBL" id="AY906243">
    <property type="protein sequence ID" value="AAX60589.1"/>
    <property type="molecule type" value="Genomic_DNA"/>
</dbReference>
<dbReference type="EMBL" id="AY906244">
    <property type="protein sequence ID" value="AAX60590.1"/>
    <property type="molecule type" value="Genomic_DNA"/>
</dbReference>
<dbReference type="EMBL" id="AY906245">
    <property type="protein sequence ID" value="AAX60591.1"/>
    <property type="molecule type" value="Genomic_DNA"/>
</dbReference>
<dbReference type="EMBL" id="AY906246">
    <property type="protein sequence ID" value="AAX60592.1"/>
    <property type="molecule type" value="Genomic_DNA"/>
</dbReference>
<dbReference type="EMBL" id="AY906247">
    <property type="protein sequence ID" value="AAX60593.1"/>
    <property type="molecule type" value="Genomic_DNA"/>
</dbReference>
<dbReference type="EMBL" id="AY906248">
    <property type="protein sequence ID" value="AAX60594.1"/>
    <property type="molecule type" value="Genomic_DNA"/>
</dbReference>
<dbReference type="EMBL" id="AY906249">
    <property type="protein sequence ID" value="AAX60595.1"/>
    <property type="molecule type" value="Genomic_DNA"/>
</dbReference>
<dbReference type="EMBL" id="AY906250">
    <property type="protein sequence ID" value="AAX60596.1"/>
    <property type="molecule type" value="Genomic_DNA"/>
</dbReference>
<dbReference type="EMBL" id="AY906251">
    <property type="protein sequence ID" value="AAX60597.1"/>
    <property type="molecule type" value="Genomic_DNA"/>
</dbReference>
<dbReference type="EMBL" id="AY906252">
    <property type="protein sequence ID" value="AAX60598.1"/>
    <property type="molecule type" value="Genomic_DNA"/>
</dbReference>
<dbReference type="EMBL" id="AY906253">
    <property type="protein sequence ID" value="AAX60599.1"/>
    <property type="molecule type" value="Genomic_DNA"/>
</dbReference>
<dbReference type="EMBL" id="AY906254">
    <property type="protein sequence ID" value="AAX60600.1"/>
    <property type="molecule type" value="Genomic_DNA"/>
</dbReference>
<dbReference type="EMBL" id="AY906255">
    <property type="protein sequence ID" value="AAX60601.1"/>
    <property type="molecule type" value="Genomic_DNA"/>
</dbReference>
<dbReference type="EMBL" id="AY906256">
    <property type="protein sequence ID" value="AAX60602.1"/>
    <property type="molecule type" value="Genomic_DNA"/>
</dbReference>
<dbReference type="EMBL" id="AY906257">
    <property type="protein sequence ID" value="AAX60603.1"/>
    <property type="molecule type" value="Genomic_DNA"/>
</dbReference>
<dbReference type="EMBL" id="AY906258">
    <property type="protein sequence ID" value="AAX60604.1"/>
    <property type="molecule type" value="Genomic_DNA"/>
</dbReference>
<dbReference type="RefSeq" id="NP_001262980.1">
    <property type="nucleotide sequence ID" value="NM_001276051.2"/>
</dbReference>
<dbReference type="RefSeq" id="NP_524507.1">
    <property type="nucleotide sequence ID" value="NM_079783.4"/>
</dbReference>
<dbReference type="STRING" id="7227.FBpp0301783"/>
<dbReference type="PaxDb" id="7227-FBpp0301783"/>
<dbReference type="DNASU" id="43154"/>
<dbReference type="EnsemblMetazoa" id="FBtr0084957">
    <property type="protein sequence ID" value="FBpp0084331"/>
    <property type="gene ID" value="FBgn0002578"/>
</dbReference>
<dbReference type="EnsemblMetazoa" id="FBtr0310083">
    <property type="protein sequence ID" value="FBpp0301783"/>
    <property type="gene ID" value="FBgn0002578"/>
</dbReference>
<dbReference type="GeneID" id="43154"/>
<dbReference type="KEGG" id="dme:Dmel_CG8342"/>
<dbReference type="AGR" id="FB:FBgn0002578"/>
<dbReference type="CTD" id="43154"/>
<dbReference type="FlyBase" id="FBgn0002578">
    <property type="gene designation" value="Kaz-m1"/>
</dbReference>
<dbReference type="VEuPathDB" id="VectorBase:FBgn0002578"/>
<dbReference type="eggNOG" id="ENOG502T80I">
    <property type="taxonomic scope" value="Eukaryota"/>
</dbReference>
<dbReference type="HOGENOM" id="CLU_1604439_0_0_1"/>
<dbReference type="InParanoid" id="O97176"/>
<dbReference type="OMA" id="LEVQECF"/>
<dbReference type="OrthoDB" id="88467at2759"/>
<dbReference type="PhylomeDB" id="O97176"/>
<dbReference type="BioGRID-ORCS" id="43154">
    <property type="hits" value="0 hits in 1 CRISPR screen"/>
</dbReference>
<dbReference type="GenomeRNAi" id="43154"/>
<dbReference type="PRO" id="PR:O97176"/>
<dbReference type="Proteomes" id="UP000000803">
    <property type="component" value="Chromosome 3R"/>
</dbReference>
<dbReference type="Bgee" id="FBgn0002578">
    <property type="expression patterns" value="Expressed in adult class III enteroendocrine cell in adult midgut (Drosophila) and 43 other cell types or tissues"/>
</dbReference>
<dbReference type="ExpressionAtlas" id="O97176">
    <property type="expression patterns" value="baseline and differential"/>
</dbReference>
<dbReference type="GO" id="GO:0004867">
    <property type="term" value="F:serine-type endopeptidase inhibitor activity"/>
    <property type="evidence" value="ECO:0000255"/>
    <property type="project" value="FlyBase"/>
</dbReference>
<dbReference type="CDD" id="cd00104">
    <property type="entry name" value="KAZAL_FS"/>
    <property type="match status" value="1"/>
</dbReference>
<dbReference type="FunFam" id="3.30.60.30:FF:000079">
    <property type="entry name" value="Enhancer of split M1 protein"/>
    <property type="match status" value="1"/>
</dbReference>
<dbReference type="Gene3D" id="3.30.60.30">
    <property type="match status" value="2"/>
</dbReference>
<dbReference type="InterPro" id="IPR002350">
    <property type="entry name" value="Kazal_dom"/>
</dbReference>
<dbReference type="InterPro" id="IPR036058">
    <property type="entry name" value="Kazal_dom_sf"/>
</dbReference>
<dbReference type="Pfam" id="PF07648">
    <property type="entry name" value="Kazal_2"/>
    <property type="match status" value="2"/>
</dbReference>
<dbReference type="SMART" id="SM00280">
    <property type="entry name" value="KAZAL"/>
    <property type="match status" value="2"/>
</dbReference>
<dbReference type="SUPFAM" id="SSF100895">
    <property type="entry name" value="Kazal-type serine protease inhibitors"/>
    <property type="match status" value="1"/>
</dbReference>
<dbReference type="PROSITE" id="PS51465">
    <property type="entry name" value="KAZAL_2"/>
    <property type="match status" value="2"/>
</dbReference>
<feature type="signal peptide" evidence="1">
    <location>
        <begin position="1"/>
        <end position="19"/>
    </location>
</feature>
<feature type="chain" id="PRO_0000016582" description="Enhancer of split M1 protein">
    <location>
        <begin position="20"/>
        <end position="156"/>
    </location>
</feature>
<feature type="domain" description="Kazal-like 1" evidence="2">
    <location>
        <begin position="23"/>
        <end position="81"/>
    </location>
</feature>
<feature type="domain" description="Kazal-like 2" evidence="2">
    <location>
        <begin position="96"/>
        <end position="156"/>
    </location>
</feature>
<feature type="site" description="Reactive bond" evidence="2">
    <location>
        <begin position="35"/>
        <end position="36"/>
    </location>
</feature>
<feature type="site" description="Reactive bond" evidence="2">
    <location>
        <begin position="108"/>
        <end position="109"/>
    </location>
</feature>
<feature type="disulfide bond" evidence="2">
    <location>
        <begin position="29"/>
        <end position="62"/>
    </location>
</feature>
<feature type="disulfide bond" evidence="2">
    <location>
        <begin position="33"/>
        <end position="55"/>
    </location>
</feature>
<feature type="disulfide bond" evidence="2">
    <location>
        <begin position="102"/>
        <end position="135"/>
    </location>
</feature>
<feature type="disulfide bond" evidence="2">
    <location>
        <begin position="106"/>
        <end position="128"/>
    </location>
</feature>
<feature type="disulfide bond" evidence="2">
    <location>
        <begin position="114"/>
        <end position="156"/>
    </location>
</feature>
<feature type="sequence variant" description="In strain: Nv2001_f0516, Nv2001_f0517, Nv2001_f0565, Nv2001_f0567, Nv2001_f0622, Nv2001_f0652, Nv2001_f0665, Nv2001_f0668, Nv2001_f0684, Nv2001_f0688, Nv2001_f0763, Nv2001_f0828, Nv2001_f0811, NVIII-2, NVIII-5 and NVIII-m15." evidence="5 6">
    <original>M</original>
    <variation>I</variation>
    <location>
        <position position="2"/>
    </location>
</feature>
<feature type="sequence variant" description="In strain: NVIII-1." evidence="5">
    <original>T</original>
    <variation>S</variation>
    <location>
        <position position="5"/>
    </location>
</feature>
<feature type="sequence variant" description="In strain: Nv2001_f0779 and Nv2001_f0555." evidence="5 6">
    <original>A</original>
    <variation>G</variation>
    <location>
        <position position="12"/>
    </location>
</feature>
<feature type="sequence variant" description="In strain: NVIII-m11." evidence="5">
    <original>K</original>
    <variation>M</variation>
    <location>
        <position position="104"/>
    </location>
</feature>
<organism>
    <name type="scientific">Drosophila melanogaster</name>
    <name type="common">Fruit fly</name>
    <dbReference type="NCBI Taxonomy" id="7227"/>
    <lineage>
        <taxon>Eukaryota</taxon>
        <taxon>Metazoa</taxon>
        <taxon>Ecdysozoa</taxon>
        <taxon>Arthropoda</taxon>
        <taxon>Hexapoda</taxon>
        <taxon>Insecta</taxon>
        <taxon>Pterygota</taxon>
        <taxon>Neoptera</taxon>
        <taxon>Endopterygota</taxon>
        <taxon>Diptera</taxon>
        <taxon>Brachycera</taxon>
        <taxon>Muscomorpha</taxon>
        <taxon>Ephydroidea</taxon>
        <taxon>Drosophilidae</taxon>
        <taxon>Drosophila</taxon>
        <taxon>Sophophora</taxon>
    </lineage>
</organism>
<gene>
    <name type="primary">Kaz-m1</name>
    <name type="synonym">m1</name>
    <name type="ORF">CG8342</name>
</gene>
<protein>
    <recommendedName>
        <fullName>Enhancer of split M1 protein</fullName>
        <shortName>E(spl)m1</shortName>
    </recommendedName>
    <alternativeName>
        <fullName>Kazal-type protease inhibitor m1</fullName>
    </alternativeName>
</protein>
<evidence type="ECO:0000255" key="1"/>
<evidence type="ECO:0000255" key="2">
    <source>
        <dbReference type="PROSITE-ProRule" id="PRU00798"/>
    </source>
</evidence>
<evidence type="ECO:0000269" key="3">
    <source>
    </source>
</evidence>
<evidence type="ECO:0000269" key="4">
    <source>
    </source>
</evidence>
<evidence type="ECO:0000269" key="5">
    <source>
    </source>
</evidence>
<evidence type="ECO:0000269" key="6">
    <source>
    </source>
</evidence>